<proteinExistence type="evidence at protein level"/>
<gene>
    <name type="primary">HNRNPA2B1</name>
    <name type="synonym">HNRPA2B1</name>
</gene>
<protein>
    <recommendedName>
        <fullName>Heterogeneous nuclear ribonucleoproteins A2/B1</fullName>
        <shortName>hnRNP A2/B1</shortName>
    </recommendedName>
</protein>
<comment type="function">
    <text evidence="2 7 15 18 21 27">Heterogeneous nuclear ribonucleoprotein (hnRNP) that associates with nascent pre-mRNAs, packaging them into hnRNP particles. The hnRNP particle arrangement on nascent hnRNA is non-random and sequence-dependent and serves to condense and stabilize the transcripts and minimize tangling and knotting. Packaging plays a role in various processes such as transcription, pre-mRNA processing, RNA nuclear export, subcellular location, mRNA translation and stability of mature mRNAs (PubMed:19099192). Forms hnRNP particles with at least 20 other different hnRNP and heterogeneous nuclear RNA in the nucleus. Involved in transport of specific mRNAs to the cytoplasm in oligodendrocytes and neurons: acts by specifically recognizing and binding the A2RE (21 nucleotide hnRNP A2 response element) or the A2RE11 (derivative 11 nucleotide oligonucleotide) sequence motifs present on some mRNAs, and promotes their transport to the cytoplasm (PubMed:10567417). Specifically binds single-stranded telomeric DNA sequences, protecting telomeric DNA repeat against endonuclease digestion (By similarity). Also binds other RNA molecules, such as primary miRNA (pri-miRNAs): acts as a nuclear 'reader' of the N6-methyladenosine (m6A) mark by specifically recognizing and binding a subset of nuclear m6A-containing pri-miRNAs. Binding to m6A-containing pri-miRNAs promotes pri-miRNA processing by enhancing binding of DGCR8 to pri-miRNA transcripts (PubMed:26321680). Involved in miRNA sorting into exosomes following sumoylation, possibly by binding (m6A)-containing pre-miRNAs (PubMed:24356509). Acts as a regulator of efficiency of mRNA splicing, possibly by binding to m6A-containing pre-mRNAs (PubMed:26321680). Plays a role in the splicing of pyruvate kinase PKM by binding repressively to sequences flanking PKM exon 9, inhibiting exon 9 inclusion and resulting in exon 10 inclusion and production of the PKM M2 isoform (PubMed:20010808). Also plays a role in the activation of the innate immune response (PubMed:31320558). Mechanistically, senses the presence of viral DNA in the nucleus, homodimerizes and is demethylated by JMJD6 (PubMed:31320558). In turn, translocates to the cytoplasm where it activates the TBK1-IRF3 pathway, leading to interferon alpha/beta production (PubMed:31320558).</text>
</comment>
<comment type="function">
    <text evidence="10 12">(Microbial infection) Involved in the transport of HIV-1 genomic RNA out of the nucleus, to the microtubule organizing center (MTOC), and then from the MTOC to the cytoplasm: acts by specifically recognizing and binding the A2RE (21 nucleotide hnRNP A2 response element) sequence motifs present on HIV-1 genomic RNA, and promotes its transport.</text>
</comment>
<comment type="subunit">
    <text evidence="9 11 13 14 19 20 21 23 25">Homodimer; dimerization is required for nucleocytoplasmic translocation (PubMed:31320558). Identified in the spliceosome C complex (PubMed:11991638). Identified in a IGF2BP1-dependent mRNP granule complex containing untranslated mRNAs (PubMed:17289661). Interacts with IGF2BP1 (PubMed:17289661). Interacts with C9orf72 (PubMed:24549040). Interacts with DGCR8 (PubMed:26321680). Interacts with TARDBP (PubMed:19429692). Interacts with CKAP5 (PubMed:15703215). Interacts with TBK1 (PubMed:31320558). Interacts with STING1 (PubMed:31320558). Interacts with SRC (PubMed:31320558). Interacts with PPIA/CYPA (PubMed:25678563). Interacts (via C-terminus) with FAM76B; the interaction results in retention of HNRNPA2B1 in the nucleus and inhibition of the NF-kappa-B-mediated inflammatory pathway (PubMed:37643469). Interacts with NF-kappa-B inhibitors NFKBIA and NFKBIE; the interaction may be mediated by the RRM2 domain of HNRNPA2B1, and HNRNPA2B1 may interact simultaneously with FAM76B and either NFKBIA or NFKBIE to form a complex (PubMed:37643469).</text>
</comment>
<comment type="interaction">
    <interactant intactId="EBI-299649">
        <id>P22626</id>
    </interactant>
    <interactant intactId="EBI-1038838">
        <id>Q13936</id>
        <label>CACNA1C</label>
    </interactant>
    <organismsDiffer>false</organismsDiffer>
    <experiments>2</experiments>
</comment>
<comment type="interaction">
    <interactant intactId="EBI-299649">
        <id>P22626</id>
    </interactant>
    <interactant intactId="EBI-352022">
        <id>Q08211</id>
        <label>DHX9</label>
    </interactant>
    <organismsDiffer>false</organismsDiffer>
    <experiments>3</experiments>
</comment>
<comment type="interaction">
    <interactant intactId="EBI-299649">
        <id>P22626</id>
    </interactant>
    <interactant intactId="EBI-11173743">
        <id>O60741</id>
        <label>HCN1</label>
    </interactant>
    <organismsDiffer>false</organismsDiffer>
    <experiments>3</experiments>
</comment>
<comment type="interaction">
    <interactant intactId="EBI-299649">
        <id>P22626</id>
    </interactant>
    <interactant intactId="EBI-724092">
        <id>Q13151</id>
        <label>HNRNPA0</label>
    </interactant>
    <organismsDiffer>false</organismsDiffer>
    <experiments>2</experiments>
</comment>
<comment type="interaction">
    <interactant intactId="EBI-299649">
        <id>P22626</id>
    </interactant>
    <interactant intactId="EBI-352662">
        <id>P09651</id>
        <label>HNRNPA1</label>
    </interactant>
    <organismsDiffer>false</organismsDiffer>
    <experiments>3</experiments>
</comment>
<comment type="interaction">
    <interactant intactId="EBI-299649">
        <id>P22626</id>
    </interactant>
    <interactant intactId="EBI-1050760">
        <id>P51991</id>
        <label>HNRNPA3</label>
    </interactant>
    <organismsDiffer>false</organismsDiffer>
    <experiments>2</experiments>
</comment>
<comment type="interaction">
    <interactant intactId="EBI-299649">
        <id>P22626</id>
    </interactant>
    <interactant intactId="EBI-1044873">
        <id>Q99729</id>
        <label>HNRNPAB</label>
    </interactant>
    <organismsDiffer>false</organismsDiffer>
    <experiments>2</experiments>
</comment>
<comment type="interaction">
    <interactant intactId="EBI-299649">
        <id>P22626</id>
    </interactant>
    <interactant intactId="EBI-357966">
        <id>P07910</id>
        <label>HNRNPC</label>
    </interactant>
    <organismsDiffer>false</organismsDiffer>
    <experiments>3</experiments>
</comment>
<comment type="interaction">
    <interactant intactId="EBI-299649">
        <id>P22626</id>
    </interactant>
    <interactant intactId="EBI-299674">
        <id>Q14103</id>
        <label>HNRNPD</label>
    </interactant>
    <organismsDiffer>false</organismsDiffer>
    <experiments>4</experiments>
</comment>
<comment type="interaction">
    <interactant intactId="EBI-299649">
        <id>P22626</id>
    </interactant>
    <interactant intactId="EBI-299727">
        <id>O14979</id>
        <label>HNRNPDL</label>
    </interactant>
    <organismsDiffer>false</organismsDiffer>
    <experiments>2</experiments>
</comment>
<comment type="interaction">
    <interactant intactId="EBI-299649">
        <id>P22626</id>
    </interactant>
    <interactant intactId="EBI-304185">
        <id>P61978</id>
        <label>HNRNPK</label>
    </interactant>
    <organismsDiffer>false</organismsDiffer>
    <experiments>2</experiments>
</comment>
<comment type="interaction">
    <interactant intactId="EBI-299649">
        <id>P22626</id>
    </interactant>
    <interactant intactId="EBI-719024">
        <id>P14866</id>
        <label>HNRNPL</label>
    </interactant>
    <organismsDiffer>false</organismsDiffer>
    <experiments>4</experiments>
</comment>
<comment type="interaction">
    <interactant intactId="EBI-299649">
        <id>P22626</id>
    </interactant>
    <interactant intactId="EBI-16071645">
        <id>P14866-1</id>
        <label>HNRNPL</label>
    </interactant>
    <organismsDiffer>false</organismsDiffer>
    <experiments>4</experiments>
</comment>
<comment type="interaction">
    <interactant intactId="EBI-299649">
        <id>P22626</id>
    </interactant>
    <interactant intactId="EBI-486809">
        <id>P52272</id>
        <label>HNRNPM</label>
    </interactant>
    <organismsDiffer>false</organismsDiffer>
    <experiments>2</experiments>
</comment>
<comment type="interaction">
    <interactant intactId="EBI-299649">
        <id>P22626</id>
    </interactant>
    <interactant intactId="EBI-78756">
        <id>Q12906</id>
        <label>ILF3</label>
    </interactant>
    <organismsDiffer>false</organismsDiffer>
    <experiments>3</experiments>
</comment>
<comment type="interaction">
    <interactant intactId="EBI-299649">
        <id>P22626</id>
    </interactant>
    <interactant intactId="EBI-7216220">
        <id>Q5T7N2</id>
        <label>L1TD1</label>
    </interactant>
    <organismsDiffer>false</organismsDiffer>
    <experiments>2</experiments>
</comment>
<comment type="interaction">
    <interactant intactId="EBI-299649">
        <id>P22626</id>
    </interactant>
    <interactant intactId="EBI-2682386">
        <id>Q96PV0</id>
        <label>SYNGAP1</label>
    </interactant>
    <organismsDiffer>false</organismsDiffer>
    <experiments>4</experiments>
</comment>
<comment type="interaction">
    <interactant intactId="EBI-299649">
        <id>P22626</id>
    </interactant>
    <interactant intactId="EBI-2548480">
        <id>Q9HA38</id>
        <label>ZMAT3</label>
    </interactant>
    <organismsDiffer>false</organismsDiffer>
    <experiments>3</experiments>
</comment>
<comment type="interaction">
    <interactant intactId="EBI-432522">
        <id>P22626-2</id>
    </interactant>
    <interactant intactId="EBI-432522">
        <id>P22626-2</id>
        <label>HNRNPA2B1</label>
    </interactant>
    <organismsDiffer>false</organismsDiffer>
    <experiments>4</experiments>
</comment>
<comment type="subcellular location">
    <subcellularLocation>
        <location evidence="23 25">Nucleus</location>
    </subcellularLocation>
    <subcellularLocation>
        <location evidence="13">Nucleus</location>
        <location evidence="13">Nucleoplasm</location>
    </subcellularLocation>
    <subcellularLocation>
        <location evidence="23 25">Cytoplasm</location>
    </subcellularLocation>
    <subcellularLocation>
        <location evidence="13 18">Cytoplasmic granule</location>
    </subcellularLocation>
    <subcellularLocation>
        <location evidence="18">Secreted</location>
        <location evidence="18">Extracellular exosome</location>
    </subcellularLocation>
    <text evidence="13 18">Localized in cytoplasmic mRNP granules containing untranslated mRNAs (PubMed:17289661). Component of ribonucleosomes (PubMed:17289661). Not found in the nucleolus (PubMed:17289661). Found in exosomes following sumoylation (PubMed:24356509).</text>
</comment>
<comment type="subcellular location">
    <molecule>Isoform A2</molecule>
    <subcellularLocation>
        <location evidence="8 13 17">Nucleus</location>
    </subcellularLocation>
    <subcellularLocation>
        <location evidence="8 13">Cytoplasm</location>
    </subcellularLocation>
    <text evidence="13">Predominantly nucleoplasmic, however is also found in the cytoplasm of cells in some tissues (PubMed:17289661).</text>
</comment>
<comment type="alternative products">
    <event type="alternative splicing"/>
    <isoform>
        <id>P22626-1</id>
        <name>B1</name>
        <name>hnRNP B1</name>
        <sequence type="displayed"/>
    </isoform>
    <isoform>
        <id>P22626-2</id>
        <name>A2</name>
        <name>hnRNP A2</name>
        <sequence type="described" ref="VSP_005830"/>
    </isoform>
</comment>
<comment type="domain">
    <text evidence="22">The disordered region, when incubated at high concentration, is able to polymerize into labile, amyloid-like fibers and form cross-beta polymerization structures, probably driving the formation of hydrogels. In contrast to irreversible, pathogenic amyloids, the fibers polymerized from low complexity (LC) regions disassemble upon dilution. A number of evidence suggests that formation of cross-beta structures by LC regions mediate the formation of RNA granules, liquid-like droplets, and hydrogels.</text>
</comment>
<comment type="PTM">
    <text evidence="18">Sumoylated in exosomes, promoting miRNAs-binding.</text>
</comment>
<comment type="PTM">
    <text evidence="2 8">Asymmetric dimethylation at Arg-266 constitutes the major methylation site (By similarity). According to a report, methylation affects subcellular location and promotes nuclear localization (PubMed:10772824). According to another report, methylation at Arg-266 does not influence nucleocytoplasmic shuttling (By similarity).</text>
</comment>
<comment type="disease" evidence="16">
    <disease id="DI-03892">
        <name>Inclusion body myopathy with early-onset Paget disease with or without frontotemporal dementia 2</name>
        <acronym>IBMPFD2</acronym>
        <description>An autosomal dominant disease characterized by disabling muscle weakness clinically resembling to limb girdle muscular dystrophy, osteolytic bone lesions consistent with Paget disease, and premature frontotemporal dementia. Clinical features show incomplete penetrance.</description>
        <dbReference type="MIM" id="615422"/>
    </disease>
    <text>The disease is caused by variants affecting the gene represented in this entry.</text>
</comment>
<comment type="disease" evidence="24">
    <disease id="DI-06737">
        <name>Oculopharyngeal muscular dystrophy 2</name>
        <acronym>OPMD2</acronym>
        <description>An autosomal dominant, early-onset myopathy characterized by progressive muscle weakness, ptosis, ophthalmoplegia, dysphagia, and variable degrees of respiratory insufficiency.</description>
        <dbReference type="MIM" id="620460"/>
    </disease>
    <text evidence="24">The disease is caused by variants affecting the gene represented in this entry. The disease is caused by frameshift variants that cluster in the low complexity disordered region. They abolish the native stop codon, and extend the reading frame resulting in a common C-terminal sequence. All variants escape degradation by the RNA quality control system, and mutant proteins accumulate in the cytoplasm due to impaired nucleocytoplasmic trafficking.</text>
</comment>
<evidence type="ECO:0000250" key="1"/>
<evidence type="ECO:0000250" key="2">
    <source>
        <dbReference type="UniProtKB" id="A7VJC2"/>
    </source>
</evidence>
<evidence type="ECO:0000250" key="3">
    <source>
        <dbReference type="UniProtKB" id="O88569"/>
    </source>
</evidence>
<evidence type="ECO:0000255" key="4"/>
<evidence type="ECO:0000255" key="5">
    <source>
        <dbReference type="PROSITE-ProRule" id="PRU00176"/>
    </source>
</evidence>
<evidence type="ECO:0000256" key="6">
    <source>
        <dbReference type="SAM" id="MobiDB-lite"/>
    </source>
</evidence>
<evidence type="ECO:0000269" key="7">
    <source>
    </source>
</evidence>
<evidence type="ECO:0000269" key="8">
    <source>
    </source>
</evidence>
<evidence type="ECO:0000269" key="9">
    <source>
    </source>
</evidence>
<evidence type="ECO:0000269" key="10">
    <source>
    </source>
</evidence>
<evidence type="ECO:0000269" key="11">
    <source>
    </source>
</evidence>
<evidence type="ECO:0000269" key="12">
    <source>
    </source>
</evidence>
<evidence type="ECO:0000269" key="13">
    <source>
    </source>
</evidence>
<evidence type="ECO:0000269" key="14">
    <source>
    </source>
</evidence>
<evidence type="ECO:0000269" key="15">
    <source>
    </source>
</evidence>
<evidence type="ECO:0000269" key="16">
    <source>
    </source>
</evidence>
<evidence type="ECO:0000269" key="17">
    <source>
    </source>
</evidence>
<evidence type="ECO:0000269" key="18">
    <source>
    </source>
</evidence>
<evidence type="ECO:0000269" key="19">
    <source>
    </source>
</evidence>
<evidence type="ECO:0000269" key="20">
    <source>
    </source>
</evidence>
<evidence type="ECO:0000269" key="21">
    <source>
    </source>
</evidence>
<evidence type="ECO:0000269" key="22">
    <source>
    </source>
</evidence>
<evidence type="ECO:0000269" key="23">
    <source>
    </source>
</evidence>
<evidence type="ECO:0000269" key="24">
    <source>
    </source>
</evidence>
<evidence type="ECO:0000269" key="25">
    <source>
    </source>
</evidence>
<evidence type="ECO:0000269" key="26">
    <source ref="6"/>
</evidence>
<evidence type="ECO:0000303" key="27">
    <source>
    </source>
</evidence>
<evidence type="ECO:0000303" key="28">
    <source>
    </source>
</evidence>
<evidence type="ECO:0000305" key="29"/>
<evidence type="ECO:0007744" key="30">
    <source>
    </source>
</evidence>
<evidence type="ECO:0007744" key="31">
    <source>
    </source>
</evidence>
<evidence type="ECO:0007744" key="32">
    <source>
    </source>
</evidence>
<evidence type="ECO:0007744" key="33">
    <source>
    </source>
</evidence>
<evidence type="ECO:0007744" key="34">
    <source>
    </source>
</evidence>
<evidence type="ECO:0007744" key="35">
    <source>
    </source>
</evidence>
<evidence type="ECO:0007744" key="36">
    <source>
    </source>
</evidence>
<evidence type="ECO:0007744" key="37">
    <source>
    </source>
</evidence>
<evidence type="ECO:0007744" key="38">
    <source>
    </source>
</evidence>
<evidence type="ECO:0007744" key="39">
    <source>
    </source>
</evidence>
<evidence type="ECO:0007744" key="40">
    <source>
    </source>
</evidence>
<evidence type="ECO:0007744" key="41">
    <source>
    </source>
</evidence>
<evidence type="ECO:0007744" key="42">
    <source>
    </source>
</evidence>
<evidence type="ECO:0007744" key="43">
    <source>
    </source>
</evidence>
<evidence type="ECO:0007744" key="44">
    <source>
    </source>
</evidence>
<evidence type="ECO:0007744" key="45">
    <source>
    </source>
</evidence>
<evidence type="ECO:0007744" key="46">
    <source>
    </source>
</evidence>
<evidence type="ECO:0007829" key="47">
    <source>
        <dbReference type="PDB" id="6WQK"/>
    </source>
</evidence>
<evidence type="ECO:0007829" key="48">
    <source>
        <dbReference type="PDB" id="7WM3"/>
    </source>
</evidence>
<evidence type="ECO:0007829" key="49">
    <source>
        <dbReference type="PDB" id="8DUW"/>
    </source>
</evidence>
<accession>P22626</accession>
<accession>A0A024RA27</accession>
<accession>A0A024RA61</accession>
<accession>A8K064</accession>
<accession>P22627</accession>
<accession>Q9UC98</accession>
<accession>Q9UDJ2</accession>
<reference key="1">
    <citation type="journal article" date="1989" name="Proc. Natl. Acad. Sci. U.S.A.">
        <title>Primary structures of the heterogeneous nuclear ribonucleoprotein A2, B1, and C2 proteins: a diversity of RNA binding proteins is generated by small peptide inserts.</title>
        <authorList>
            <person name="Burd C.G."/>
            <person name="Swanson M.S."/>
            <person name="Goerlach M."/>
            <person name="Dreyfuss G."/>
        </authorList>
    </citation>
    <scope>NUCLEOTIDE SEQUENCE [MRNA] (ISOFORMS B1 AND A2)</scope>
</reference>
<reference key="2">
    <citation type="journal article" date="1994" name="Nucleic Acids Res.">
        <title>Two homologous genes, originated by duplication, encode the human hnRNP proteins A2 and A1.</title>
        <authorList>
            <person name="Biamonti G."/>
            <person name="Ruggiu M."/>
            <person name="Saccone S."/>
            <person name="Della Valle G."/>
            <person name="Riva S."/>
        </authorList>
    </citation>
    <scope>NUCLEOTIDE SEQUENCE [GENOMIC DNA]</scope>
    <source>
        <tissue>Liver</tissue>
    </source>
</reference>
<reference key="3">
    <citation type="journal article" date="1995" name="Genomics">
        <title>Structure and expression of the gene (HNRPA2B1) encoding the human hnRNP protein A2/B1.</title>
        <authorList>
            <person name="Kozu T."/>
            <person name="Henrich B."/>
            <person name="Schaefer K.P."/>
        </authorList>
    </citation>
    <scope>NUCLEOTIDE SEQUENCE [GENOMIC DNA]</scope>
</reference>
<reference key="4">
    <citation type="journal article" date="2004" name="Nat. Genet.">
        <title>Complete sequencing and characterization of 21,243 full-length human cDNAs.</title>
        <authorList>
            <person name="Ota T."/>
            <person name="Suzuki Y."/>
            <person name="Nishikawa T."/>
            <person name="Otsuki T."/>
            <person name="Sugiyama T."/>
            <person name="Irie R."/>
            <person name="Wakamatsu A."/>
            <person name="Hayashi K."/>
            <person name="Sato H."/>
            <person name="Nagai K."/>
            <person name="Kimura K."/>
            <person name="Makita H."/>
            <person name="Sekine M."/>
            <person name="Obayashi M."/>
            <person name="Nishi T."/>
            <person name="Shibahara T."/>
            <person name="Tanaka T."/>
            <person name="Ishii S."/>
            <person name="Yamamoto J."/>
            <person name="Saito K."/>
            <person name="Kawai Y."/>
            <person name="Isono Y."/>
            <person name="Nakamura Y."/>
            <person name="Nagahari K."/>
            <person name="Murakami K."/>
            <person name="Yasuda T."/>
            <person name="Iwayanagi T."/>
            <person name="Wagatsuma M."/>
            <person name="Shiratori A."/>
            <person name="Sudo H."/>
            <person name="Hosoiri T."/>
            <person name="Kaku Y."/>
            <person name="Kodaira H."/>
            <person name="Kondo H."/>
            <person name="Sugawara M."/>
            <person name="Takahashi M."/>
            <person name="Kanda K."/>
            <person name="Yokoi T."/>
            <person name="Furuya T."/>
            <person name="Kikkawa E."/>
            <person name="Omura Y."/>
            <person name="Abe K."/>
            <person name="Kamihara K."/>
            <person name="Katsuta N."/>
            <person name="Sato K."/>
            <person name="Tanikawa M."/>
            <person name="Yamazaki M."/>
            <person name="Ninomiya K."/>
            <person name="Ishibashi T."/>
            <person name="Yamashita H."/>
            <person name="Murakawa K."/>
            <person name="Fujimori K."/>
            <person name="Tanai H."/>
            <person name="Kimata M."/>
            <person name="Watanabe M."/>
            <person name="Hiraoka S."/>
            <person name="Chiba Y."/>
            <person name="Ishida S."/>
            <person name="Ono Y."/>
            <person name="Takiguchi S."/>
            <person name="Watanabe S."/>
            <person name="Yosida M."/>
            <person name="Hotuta T."/>
            <person name="Kusano J."/>
            <person name="Kanehori K."/>
            <person name="Takahashi-Fujii A."/>
            <person name="Hara H."/>
            <person name="Tanase T.-O."/>
            <person name="Nomura Y."/>
            <person name="Togiya S."/>
            <person name="Komai F."/>
            <person name="Hara R."/>
            <person name="Takeuchi K."/>
            <person name="Arita M."/>
            <person name="Imose N."/>
            <person name="Musashino K."/>
            <person name="Yuuki H."/>
            <person name="Oshima A."/>
            <person name="Sasaki N."/>
            <person name="Aotsuka S."/>
            <person name="Yoshikawa Y."/>
            <person name="Matsunawa H."/>
            <person name="Ichihara T."/>
            <person name="Shiohata N."/>
            <person name="Sano S."/>
            <person name="Moriya S."/>
            <person name="Momiyama H."/>
            <person name="Satoh N."/>
            <person name="Takami S."/>
            <person name="Terashima Y."/>
            <person name="Suzuki O."/>
            <person name="Nakagawa S."/>
            <person name="Senoh A."/>
            <person name="Mizoguchi H."/>
            <person name="Goto Y."/>
            <person name="Shimizu F."/>
            <person name="Wakebe H."/>
            <person name="Hishigaki H."/>
            <person name="Watanabe T."/>
            <person name="Sugiyama A."/>
            <person name="Takemoto M."/>
            <person name="Kawakami B."/>
            <person name="Yamazaki M."/>
            <person name="Watanabe K."/>
            <person name="Kumagai A."/>
            <person name="Itakura S."/>
            <person name="Fukuzumi Y."/>
            <person name="Fujimori Y."/>
            <person name="Komiyama M."/>
            <person name="Tashiro H."/>
            <person name="Tanigami A."/>
            <person name="Fujiwara T."/>
            <person name="Ono T."/>
            <person name="Yamada K."/>
            <person name="Fujii Y."/>
            <person name="Ozaki K."/>
            <person name="Hirao M."/>
            <person name="Ohmori Y."/>
            <person name="Kawabata A."/>
            <person name="Hikiji T."/>
            <person name="Kobatake N."/>
            <person name="Inagaki H."/>
            <person name="Ikema Y."/>
            <person name="Okamoto S."/>
            <person name="Okitani R."/>
            <person name="Kawakami T."/>
            <person name="Noguchi S."/>
            <person name="Itoh T."/>
            <person name="Shigeta K."/>
            <person name="Senba T."/>
            <person name="Matsumura K."/>
            <person name="Nakajima Y."/>
            <person name="Mizuno T."/>
            <person name="Morinaga M."/>
            <person name="Sasaki M."/>
            <person name="Togashi T."/>
            <person name="Oyama M."/>
            <person name="Hata H."/>
            <person name="Watanabe M."/>
            <person name="Komatsu T."/>
            <person name="Mizushima-Sugano J."/>
            <person name="Satoh T."/>
            <person name="Shirai Y."/>
            <person name="Takahashi Y."/>
            <person name="Nakagawa K."/>
            <person name="Okumura K."/>
            <person name="Nagase T."/>
            <person name="Nomura N."/>
            <person name="Kikuchi H."/>
            <person name="Masuho Y."/>
            <person name="Yamashita R."/>
            <person name="Nakai K."/>
            <person name="Yada T."/>
            <person name="Nakamura Y."/>
            <person name="Ohara O."/>
            <person name="Isogai T."/>
            <person name="Sugano S."/>
        </authorList>
    </citation>
    <scope>NUCLEOTIDE SEQUENCE [LARGE SCALE MRNA] (ISOFORM B1)</scope>
    <source>
        <tissue>Glial tumor</tissue>
    </source>
</reference>
<reference key="5">
    <citation type="submission" date="2005-07" db="EMBL/GenBank/DDBJ databases">
        <authorList>
            <person name="Mural R.J."/>
            <person name="Istrail S."/>
            <person name="Sutton G.G."/>
            <person name="Florea L."/>
            <person name="Halpern A.L."/>
            <person name="Mobarry C.M."/>
            <person name="Lippert R."/>
            <person name="Walenz B."/>
            <person name="Shatkay H."/>
            <person name="Dew I."/>
            <person name="Miller J.R."/>
            <person name="Flanigan M.J."/>
            <person name="Edwards N.J."/>
            <person name="Bolanos R."/>
            <person name="Fasulo D."/>
            <person name="Halldorsson B.V."/>
            <person name="Hannenhalli S."/>
            <person name="Turner R."/>
            <person name="Yooseph S."/>
            <person name="Lu F."/>
            <person name="Nusskern D.R."/>
            <person name="Shue B.C."/>
            <person name="Zheng X.H."/>
            <person name="Zhong F."/>
            <person name="Delcher A.L."/>
            <person name="Huson D.H."/>
            <person name="Kravitz S.A."/>
            <person name="Mouchard L."/>
            <person name="Reinert K."/>
            <person name="Remington K.A."/>
            <person name="Clark A.G."/>
            <person name="Waterman M.S."/>
            <person name="Eichler E.E."/>
            <person name="Adams M.D."/>
            <person name="Hunkapiller M.W."/>
            <person name="Myers E.W."/>
            <person name="Venter J.C."/>
        </authorList>
    </citation>
    <scope>NUCLEOTIDE SEQUENCE [LARGE SCALE GENOMIC DNA]</scope>
</reference>
<reference key="6">
    <citation type="submission" date="2009-06" db="UniProtKB">
        <authorList>
            <person name="Bienvenut W.V."/>
            <person name="Lilla S."/>
            <person name="von Kriegsheim A."/>
            <person name="Lempens A."/>
            <person name="Kolch W."/>
            <person name="Dozynkiewicz M."/>
            <person name="Norman J.C."/>
        </authorList>
    </citation>
    <scope>PROTEIN SEQUENCE OF 1-12; 22-59; 63-89; 100-147; 153-185; 201-266 AND 326-350</scope>
    <scope>ACETYLATION AT MET-1</scope>
    <scope>METHYLATION AT LYS-104; ARG-203 AND ARG-213</scope>
    <scope>IDENTIFICATION BY MASS SPECTROMETRY</scope>
    <source>
        <tissue>Ovarian carcinoma</tissue>
    </source>
</reference>
<reference key="7">
    <citation type="submission" date="2008-12" db="UniProtKB">
        <authorList>
            <person name="Lubec G."/>
            <person name="Vishwanath V."/>
            <person name="Chen W.-Q."/>
            <person name="Sun Y."/>
        </authorList>
    </citation>
    <scope>PROTEIN SEQUENCE OF 22-38; 154-168; 174-185; 214-228 AND 326-350</scope>
    <scope>IDENTIFICATION BY MASS SPECTROMETRY</scope>
    <source>
        <tissue>Brain</tissue>
        <tissue>Cajal-Retzius cell</tissue>
        <tissue>Fetal brain cortex</tissue>
    </source>
</reference>
<reference key="8">
    <citation type="journal article" date="1992" name="J. Clin. Invest.">
        <title>Purification and partial sequencing of the nuclear autoantigen RA33 shows that it is indistinguishable from the A2 protein of the heterogeneous nuclear ribonucleoprotein complex.</title>
        <authorList>
            <person name="Steiner G."/>
            <person name="Hartmuth K."/>
            <person name="Skriner K."/>
            <person name="Maurer-Fogy I."/>
            <person name="Sinski A."/>
            <person name="Thalmann E."/>
            <person name="Hassfeld W."/>
            <person name="Barta A."/>
            <person name="Smolen J.S."/>
        </authorList>
    </citation>
    <scope>PROTEIN SEQUENCE OF 39-46; 154-168; 204-228 AND 267-286</scope>
    <source>
        <tissue>Cervix carcinoma</tissue>
    </source>
</reference>
<reference key="9">
    <citation type="journal article" date="1994" name="Biochem. Biophys. Res. Commun.">
        <title>ADP-ribosylation of heterogeneous ribonucleoproteins in HeLa cells.</title>
        <authorList>
            <person name="Prasad S."/>
            <person name="Walent J."/>
            <person name="Dritschilo A."/>
        </authorList>
    </citation>
    <scope>PROTEIN SEQUENCE OF 80-100</scope>
    <source>
        <tissue>Cervix carcinoma</tissue>
    </source>
</reference>
<reference key="10">
    <citation type="journal article" date="1986" name="J. Biol. Chem.">
        <title>Purification and domain structure of core hnRNP proteins A1 and A2 and their relationship to single-stranded DNA-binding proteins.</title>
        <authorList>
            <person name="Kumar A."/>
            <person name="Willams K.R."/>
            <person name="Szer W."/>
        </authorList>
    </citation>
    <scope>PROTEIN SEQUENCE OF 100-107; 121-128 AND 174-180</scope>
</reference>
<reference key="11">
    <citation type="journal article" date="1990" name="Electrophoresis">
        <title>Two-dimensional gel electrophoresis, protein electroblotting and microsequencing: a direct link between proteins and genes.</title>
        <authorList>
            <person name="Bauw G."/>
            <person name="Rasmussen H.H."/>
            <person name="van den Bulcke M."/>
            <person name="van Damme J."/>
            <person name="Puype M."/>
            <person name="Gesser B."/>
            <person name="Celis J.E."/>
            <person name="Vandekerckhove J."/>
        </authorList>
    </citation>
    <scope>PROTEIN SEQUENCE OF 154-160; 204-212 AND 214-228</scope>
</reference>
<reference key="12">
    <citation type="journal article" date="1999" name="J. Biol. Chem.">
        <title>Mutational analysis of a heterogeneous nuclear ribonucleoprotein A2 response element for RNA trafficking.</title>
        <authorList>
            <person name="Munro T.P."/>
            <person name="Magee R.J."/>
            <person name="Kidd G.J."/>
            <person name="Carson J.H."/>
            <person name="Barbarese E."/>
            <person name="Smith L.M."/>
            <person name="Smith R."/>
        </authorList>
    </citation>
    <scope>FUNCTION</scope>
    <scope>RNA-BINDING</scope>
</reference>
<reference key="13">
    <citation type="journal article" date="2000" name="Exp. Cell Res.">
        <title>The RGG domain in hnRNP A2 affects subcellular localization.</title>
        <authorList>
            <person name="Nichols R.C."/>
            <person name="Wang X.W."/>
            <person name="Tang J."/>
            <person name="Hamilton B.J."/>
            <person name="High F.A."/>
            <person name="Herschman H.R."/>
            <person name="Rigby W.F."/>
        </authorList>
    </citation>
    <scope>SUBCELLULAR LOCATION (ISOFORM A2)</scope>
    <scope>METHYLATION</scope>
</reference>
<reference key="14">
    <citation type="journal article" date="2002" name="RNA">
        <title>Purification and characterization of native spliceosomes suitable for three-dimensional structural analysis.</title>
        <authorList>
            <person name="Jurica M.S."/>
            <person name="Licklider L.J."/>
            <person name="Gygi S.P."/>
            <person name="Grigorieff N."/>
            <person name="Moore M.J."/>
        </authorList>
    </citation>
    <scope>IDENTIFICATION BY MASS SPECTROMETRY</scope>
    <scope>IDENTIFICATION IN THE SPLICEOSOMAL C COMPLEX</scope>
</reference>
<reference key="15">
    <citation type="journal article" date="2003" name="Nature">
        <title>Proteomic characterization of the human centrosome by protein correlation profiling.</title>
        <authorList>
            <person name="Andersen J.S."/>
            <person name="Wilkinson C.J."/>
            <person name="Mayor T."/>
            <person name="Mortensen P."/>
            <person name="Nigg E.A."/>
            <person name="Mann M."/>
        </authorList>
    </citation>
    <scope>IDENTIFICATION BY MASS SPECTROMETRY</scope>
    <source>
        <tissue>Lymphoblast</tissue>
    </source>
</reference>
<reference key="16">
    <citation type="journal article" date="2004" name="J. Biol. Chem.">
        <title>A late role for the association of hnRNP A2 with the HIV-1 hnRNP A2 response elements in genomic RNA, Gag, and Vpr localization.</title>
        <authorList>
            <person name="Beriault V."/>
            <person name="Clement J.F."/>
            <person name="Levesque K."/>
            <person name="Lebel C."/>
            <person name="Yong X."/>
            <person name="Chabot B."/>
            <person name="Cohen E.A."/>
            <person name="Cochrane A.W."/>
            <person name="Rigby W.F."/>
            <person name="Mouland A.J."/>
        </authorList>
    </citation>
    <scope>FUNCTION (MICROBIAL INFECTION)</scope>
</reference>
<reference key="17">
    <citation type="journal article" date="2004" name="Nat. Methods">
        <title>Identifying and quantifying in vivo methylation sites by heavy methyl SILAC.</title>
        <authorList>
            <person name="Ong S.E."/>
            <person name="Mittler G."/>
            <person name="Mann M."/>
        </authorList>
    </citation>
    <scope>METHYLATION [LARGE SCALE ANALYSIS] AT ARG-203</scope>
    <scope>IDENTIFICATION BY MASS SPECTROMETRY [LARGE SCALE ANALYSIS]</scope>
    <source>
        <tissue>Cervix carcinoma</tissue>
    </source>
</reference>
<reference key="18">
    <citation type="journal article" date="2005" name="Mol. Biol. Cell">
        <title>The microtubule-associated protein tumor overexpressed gene binds to the RNA trafficking protein heterogeneous nuclear ribonucleoprotein A2.</title>
        <authorList>
            <person name="Kosturko L.D."/>
            <person name="Maggipinto M.J."/>
            <person name="D'Sa C."/>
            <person name="Carson J.H."/>
            <person name="Barbarese E."/>
        </authorList>
    </citation>
    <scope>INTERACTION WITH CKAP5</scope>
</reference>
<reference key="19">
    <citation type="journal article" date="2006" name="Traffic">
        <title>Trafficking of HIV-1 RNA is mediated by heterogeneous nuclear ribonucleoprotein A2 expression and impacts on viral assembly.</title>
        <authorList>
            <person name="Levesque K."/>
            <person name="Halvorsen M."/>
            <person name="Abrahamyan L."/>
            <person name="Chatel-Chaix L."/>
            <person name="Poupon V."/>
            <person name="Gordon H."/>
            <person name="DesGroseillers L."/>
            <person name="Gatignol A."/>
            <person name="Mouland A.J."/>
        </authorList>
    </citation>
    <scope>FUNCTION (MICROBIAL INFECTION)</scope>
</reference>
<reference key="20">
    <citation type="journal article" date="2007" name="J. Proteome Res.">
        <title>Improved titanium dioxide enrichment of phosphopeptides from HeLa cells and high confident phosphopeptide identification by cross-validation of MS/MS and MS/MS/MS spectra.</title>
        <authorList>
            <person name="Yu L.R."/>
            <person name="Zhu Z."/>
            <person name="Chan K.C."/>
            <person name="Issaq H.J."/>
            <person name="Dimitrov D.S."/>
            <person name="Veenstra T.D."/>
        </authorList>
    </citation>
    <scope>PHOSPHORYLATION [LARGE SCALE ANALYSIS] AT SER-259 AND SER-341</scope>
    <scope>IDENTIFICATION BY MASS SPECTROMETRY [LARGE SCALE ANALYSIS]</scope>
    <source>
        <tissue>Cervix carcinoma</tissue>
    </source>
</reference>
<reference key="21">
    <citation type="journal article" date="2007" name="Mol. Cell. Proteomics">
        <title>Molecular composition of IMP1 ribonucleoprotein granules.</title>
        <authorList>
            <person name="Joeson L."/>
            <person name="Vikesaa J."/>
            <person name="Krogh A."/>
            <person name="Nielsen L.K."/>
            <person name="Hansen T."/>
            <person name="Borup R."/>
            <person name="Johnsen A.H."/>
            <person name="Christiansen J."/>
            <person name="Nielsen F.C."/>
        </authorList>
    </citation>
    <scope>IDENTIFICATION IN A MRNP GRANULE COMPLEX</scope>
    <scope>INTERACTION WITH IGF2BP1</scope>
    <scope>SUBCELLULAR LOCATION</scope>
    <scope>IDENTIFICATION BY MASS SPECTROMETRY</scope>
</reference>
<reference key="22">
    <citation type="journal article" date="2008" name="J. Proteome Res.">
        <title>Combining protein-based IMAC, peptide-based IMAC, and MudPIT for efficient phosphoproteomic analysis.</title>
        <authorList>
            <person name="Cantin G.T."/>
            <person name="Yi W."/>
            <person name="Lu B."/>
            <person name="Park S.K."/>
            <person name="Xu T."/>
            <person name="Lee J.-D."/>
            <person name="Yates J.R. III"/>
        </authorList>
    </citation>
    <scope>PHOSPHORYLATION [LARGE SCALE ANALYSIS] AT SER-259 AND SER-341</scope>
    <scope>IDENTIFICATION BY MASS SPECTROMETRY [LARGE SCALE ANALYSIS]</scope>
    <source>
        <tissue>Cervix carcinoma</tissue>
    </source>
</reference>
<reference key="23">
    <citation type="journal article" date="2008" name="Mol. Cell">
        <title>Kinase-selective enrichment enables quantitative phosphoproteomics of the kinome across the cell cycle.</title>
        <authorList>
            <person name="Daub H."/>
            <person name="Olsen J.V."/>
            <person name="Bairlein M."/>
            <person name="Gnad F."/>
            <person name="Oppermann F.S."/>
            <person name="Korner R."/>
            <person name="Greff Z."/>
            <person name="Keri G."/>
            <person name="Stemmann O."/>
            <person name="Mann M."/>
        </authorList>
    </citation>
    <scope>PHOSPHORYLATION [LARGE SCALE ANALYSIS] AT SER-259</scope>
    <scope>IDENTIFICATION BY MASS SPECTROMETRY [LARGE SCALE ANALYSIS]</scope>
    <source>
        <tissue>Cervix carcinoma</tissue>
    </source>
</reference>
<reference key="24">
    <citation type="journal article" date="2008" name="Proc. Natl. Acad. Sci. U.S.A.">
        <title>A quantitative atlas of mitotic phosphorylation.</title>
        <authorList>
            <person name="Dephoure N."/>
            <person name="Zhou C."/>
            <person name="Villen J."/>
            <person name="Beausoleil S.A."/>
            <person name="Bakalarski C.E."/>
            <person name="Elledge S.J."/>
            <person name="Gygi S.P."/>
        </authorList>
    </citation>
    <scope>PHOSPHORYLATION [LARGE SCALE ANALYSIS] AT SER-259; SER-341 AND SER-344</scope>
    <scope>IDENTIFICATION BY MASS SPECTROMETRY [LARGE SCALE ANALYSIS]</scope>
    <source>
        <tissue>Cervix carcinoma</tissue>
    </source>
</reference>
<reference key="25">
    <citation type="journal article" date="2009" name="Anal. Chem.">
        <title>Lys-N and trypsin cover complementary parts of the phosphoproteome in a refined SCX-based approach.</title>
        <authorList>
            <person name="Gauci S."/>
            <person name="Helbig A.O."/>
            <person name="Slijper M."/>
            <person name="Krijgsveld J."/>
            <person name="Heck A.J."/>
            <person name="Mohammed S."/>
        </authorList>
    </citation>
    <scope>IDENTIFICATION BY MASS SPECTROMETRY [LARGE SCALE ANALYSIS]</scope>
</reference>
<reference key="26">
    <citation type="journal article" date="2009" name="Cell. Mol. Life Sci.">
        <title>Nuclear functions of heterogeneous nuclear ribonucleoproteins A/B.</title>
        <authorList>
            <person name="He Y."/>
            <person name="Smith R."/>
        </authorList>
    </citation>
    <scope>REVIEW</scope>
</reference>
<reference key="27">
    <citation type="journal article" date="2009" name="Mol. Cell. Proteomics">
        <title>Large-scale proteomics analysis of the human kinome.</title>
        <authorList>
            <person name="Oppermann F.S."/>
            <person name="Gnad F."/>
            <person name="Olsen J.V."/>
            <person name="Hornberger R."/>
            <person name="Greff Z."/>
            <person name="Keri G."/>
            <person name="Mann M."/>
            <person name="Daub H."/>
        </authorList>
    </citation>
    <scope>PHOSPHORYLATION [LARGE SCALE ANALYSIS] AT SER-259</scope>
    <scope>IDENTIFICATION BY MASS SPECTROMETRY [LARGE SCALE ANALYSIS]</scope>
</reference>
<reference key="28">
    <citation type="journal article" date="2009" name="Nucleic Acids Res.">
        <title>Functional mapping of the interaction between TDP-43 and hnRNP A2 in vivo.</title>
        <authorList>
            <person name="D'Ambrogio A."/>
            <person name="Buratti E."/>
            <person name="Stuani C."/>
            <person name="Guarnaccia C."/>
            <person name="Romano M."/>
            <person name="Ayala Y.M."/>
            <person name="Baralle F.E."/>
        </authorList>
    </citation>
    <scope>INTERACTION WITH TARDBP</scope>
</reference>
<reference key="29">
    <citation type="journal article" date="2009" name="Sci. Signal.">
        <title>Quantitative phosphoproteomic analysis of T cell receptor signaling reveals system-wide modulation of protein-protein interactions.</title>
        <authorList>
            <person name="Mayya V."/>
            <person name="Lundgren D.H."/>
            <person name="Hwang S.-I."/>
            <person name="Rezaul K."/>
            <person name="Wu L."/>
            <person name="Eng J.K."/>
            <person name="Rodionov V."/>
            <person name="Han D.K."/>
        </authorList>
    </citation>
    <scope>PHOSPHORYLATION [LARGE SCALE ANALYSIS] AT SER-85; SER-212; SER-259 AND SER-344</scope>
    <scope>IDENTIFICATION BY MASS SPECTROMETRY [LARGE SCALE ANALYSIS]</scope>
    <source>
        <tissue>Leukemic T-cell</tissue>
    </source>
</reference>
<reference key="30">
    <citation type="journal article" date="2009" name="Science">
        <title>Lysine acetylation targets protein complexes and co-regulates major cellular functions.</title>
        <authorList>
            <person name="Choudhary C."/>
            <person name="Kumar C."/>
            <person name="Gnad F."/>
            <person name="Nielsen M.L."/>
            <person name="Rehman M."/>
            <person name="Walther T.C."/>
            <person name="Olsen J.V."/>
            <person name="Mann M."/>
        </authorList>
    </citation>
    <scope>ACETYLATION [LARGE SCALE ANALYSIS] AT LYS-168 AND LYS-173</scope>
    <scope>IDENTIFICATION BY MASS SPECTROMETRY [LARGE SCALE ANALYSIS]</scope>
</reference>
<reference key="31">
    <citation type="journal article" date="2010" name="Nature">
        <title>HnRNP proteins controlled by c-Myc deregulate pyruvate kinase mRNA splicing in cancer.</title>
        <authorList>
            <person name="David C.J."/>
            <person name="Chen M."/>
            <person name="Assanah M."/>
            <person name="Canoll P."/>
            <person name="Manley J.L."/>
        </authorList>
    </citation>
    <scope>FUNCTION</scope>
    <scope>IDENTIFICATION BY MASS SPECTROMETRY</scope>
</reference>
<reference key="32">
    <citation type="journal article" date="2010" name="Sci. Signal.">
        <title>Quantitative phosphoproteomics reveals widespread full phosphorylation site occupancy during mitosis.</title>
        <authorList>
            <person name="Olsen J.V."/>
            <person name="Vermeulen M."/>
            <person name="Santamaria A."/>
            <person name="Kumar C."/>
            <person name="Miller M.L."/>
            <person name="Jensen L.J."/>
            <person name="Gnad F."/>
            <person name="Cox J."/>
            <person name="Jensen T.S."/>
            <person name="Nigg E.A."/>
            <person name="Brunak S."/>
            <person name="Mann M."/>
        </authorList>
    </citation>
    <scope>PHOSPHORYLATION [LARGE SCALE ANALYSIS] AT SER-85; SER-149; SER-212; SER-225; SER-231; SER-259; SER-341 AND SER-344</scope>
    <scope>IDENTIFICATION BY MASS SPECTROMETRY [LARGE SCALE ANALYSIS]</scope>
    <source>
        <tissue>Cervix carcinoma</tissue>
    </source>
</reference>
<reference key="33">
    <citation type="journal article" date="2011" name="BMC Syst. Biol.">
        <title>Initial characterization of the human central proteome.</title>
        <authorList>
            <person name="Burkard T.R."/>
            <person name="Planyavsky M."/>
            <person name="Kaupe I."/>
            <person name="Breitwieser F.P."/>
            <person name="Buerckstuemmer T."/>
            <person name="Bennett K.L."/>
            <person name="Superti-Furga G."/>
            <person name="Colinge J."/>
        </authorList>
    </citation>
    <scope>IDENTIFICATION BY MASS SPECTROMETRY [LARGE SCALE ANALYSIS]</scope>
</reference>
<reference key="34">
    <citation type="journal article" date="2011" name="Sci. Signal.">
        <title>System-wide temporal characterization of the proteome and phosphoproteome of human embryonic stem cell differentiation.</title>
        <authorList>
            <person name="Rigbolt K.T."/>
            <person name="Prokhorova T.A."/>
            <person name="Akimov V."/>
            <person name="Henningsen J."/>
            <person name="Johansen P.T."/>
            <person name="Kratchmarova I."/>
            <person name="Kassem M."/>
            <person name="Mann M."/>
            <person name="Olsen J.V."/>
            <person name="Blagoev B."/>
        </authorList>
    </citation>
    <scope>PHOSPHORYLATION [LARGE SCALE ANALYSIS] AT SER-212; SER-225; SER-231; SER-236; SER-259; SER-324; TYR-331 AND SER-344</scope>
    <scope>IDENTIFICATION BY MASS SPECTROMETRY [LARGE SCALE ANALYSIS]</scope>
</reference>
<reference key="35">
    <citation type="journal article" date="2012" name="J. Proteome Res.">
        <title>Resveratrol-induced changes of the human adipocyte secretion profile.</title>
        <authorList>
            <person name="Rosenow A."/>
            <person name="Noben J.P."/>
            <person name="Jocken J."/>
            <person name="Kallendrusch S."/>
            <person name="Fischer-Posovszky P."/>
            <person name="Mariman E.C."/>
            <person name="Renes J."/>
        </authorList>
    </citation>
    <scope>IDENTIFICATION BY MASS SPECTROMETRY [LARGE SCALE ANALYSIS]</scope>
</reference>
<reference key="36">
    <citation type="journal article" date="2012" name="Proc. Natl. Acad. Sci. U.S.A.">
        <title>N-terminal acetylome analyses and functional insights of the N-terminal acetyltransferase NatB.</title>
        <authorList>
            <person name="Van Damme P."/>
            <person name="Lasa M."/>
            <person name="Polevoda B."/>
            <person name="Gazquez C."/>
            <person name="Elosegui-Artola A."/>
            <person name="Kim D.S."/>
            <person name="De Juan-Pardo E."/>
            <person name="Demeyer K."/>
            <person name="Hole K."/>
            <person name="Larrea E."/>
            <person name="Timmerman E."/>
            <person name="Prieto J."/>
            <person name="Arnesen T."/>
            <person name="Sherman F."/>
            <person name="Gevaert K."/>
            <person name="Aldabe R."/>
        </authorList>
    </citation>
    <scope>ACETYLATION [LARGE SCALE ANALYSIS] AT MET-1</scope>
    <scope>IDENTIFICATION BY MASS SPECTROMETRY [LARGE SCALE ANALYSIS]</scope>
</reference>
<reference key="37">
    <citation type="journal article" date="2013" name="J. Proteome Res.">
        <title>Toward a comprehensive characterization of a human cancer cell phosphoproteome.</title>
        <authorList>
            <person name="Zhou H."/>
            <person name="Di Palma S."/>
            <person name="Preisinger C."/>
            <person name="Peng M."/>
            <person name="Polat A.N."/>
            <person name="Heck A.J."/>
            <person name="Mohammed S."/>
        </authorList>
    </citation>
    <scope>PHOSPHORYLATION [LARGE SCALE ANALYSIS] AT THR-4; SER-29; THR-140; THR-159; THR-176; SER-189; SER-201; SER-212; SER-225; SER-259; SER-324; TYR-331; SER-341 AND SER-344</scope>
    <scope>IDENTIFICATION BY MASS SPECTROMETRY [LARGE SCALE ANALYSIS]</scope>
    <source>
        <tissue>Cervix carcinoma</tissue>
        <tissue>Erythroleukemia</tissue>
    </source>
</reference>
<reference key="38">
    <citation type="journal article" date="2013" name="Nat. Commun.">
        <title>Sumoylated hnRNPA2B1 controls the sorting of miRNAs into exosomes through binding to specific motifs.</title>
        <authorList>
            <person name="Villarroya-Beltri C."/>
            <person name="Gutierrez-Vazquez C."/>
            <person name="Sanchez-Cabo F."/>
            <person name="Perez-Hernandez D."/>
            <person name="Vazquez J."/>
            <person name="Martin-Cofreces N."/>
            <person name="Martinez-Herrera D.J."/>
            <person name="Pascual-Montano A."/>
            <person name="Mittelbrunn M."/>
            <person name="Sanchez-Madrid F."/>
        </authorList>
    </citation>
    <scope>FUNCTION</scope>
    <scope>SUBCELLULAR LOCATION</scope>
    <scope>SUMOYLATION</scope>
</reference>
<reference key="39">
    <citation type="journal article" date="2013" name="PLoS ONE">
        <title>Arginine methylation of hnRNP A2 does not directly govern its subcellular localization.</title>
        <authorList>
            <person name="Friend L.R."/>
            <person name="Landsberg M.J."/>
            <person name="Nouwens A.S."/>
            <person name="Wei Y."/>
            <person name="Rothnagel J.A."/>
            <person name="Smith R."/>
        </authorList>
    </citation>
    <scope>SUBCELLULAR LOCATION (ISOFORM A2)</scope>
</reference>
<reference key="40">
    <citation type="journal article" date="2014" name="Hum. Mol. Genet.">
        <title>C9ORF72, implicated in amytrophic lateral sclerosis and frontotemporal dementia, regulates endosomal trafficking.</title>
        <authorList>
            <person name="Farg M.A."/>
            <person name="Sundaramoorthy V."/>
            <person name="Sultana J.M."/>
            <person name="Yang S."/>
            <person name="Atkinson R.A."/>
            <person name="Levina V."/>
            <person name="Halloran M.A."/>
            <person name="Gleeson P.A."/>
            <person name="Blair I.P."/>
            <person name="Soo K.Y."/>
            <person name="King A.E."/>
            <person name="Atkin J.D."/>
        </authorList>
    </citation>
    <scope>INTERACTION WITH C9ORF72</scope>
</reference>
<reference key="41">
    <citation type="journal article" date="2014" name="J. Proteomics">
        <title>An enzyme assisted RP-RPLC approach for in-depth analysis of human liver phosphoproteome.</title>
        <authorList>
            <person name="Bian Y."/>
            <person name="Song C."/>
            <person name="Cheng K."/>
            <person name="Dong M."/>
            <person name="Wang F."/>
            <person name="Huang J."/>
            <person name="Sun D."/>
            <person name="Wang L."/>
            <person name="Ye M."/>
            <person name="Zou H."/>
        </authorList>
    </citation>
    <scope>PHOSPHORYLATION [LARGE SCALE ANALYSIS] AT SER-29; SER-85; SER-212; SER-225; SER-231; SER-341; SER-344 AND TYR-347</scope>
    <scope>IDENTIFICATION BY MASS SPECTROMETRY [LARGE SCALE ANALYSIS]</scope>
    <source>
        <tissue>Liver</tissue>
    </source>
</reference>
<reference key="42">
    <citation type="journal article" date="2014" name="Mol. Cell. Proteomics">
        <title>Immunoaffinity enrichment and mass spectrometry analysis of protein methylation.</title>
        <authorList>
            <person name="Guo A."/>
            <person name="Gu H."/>
            <person name="Zhou J."/>
            <person name="Mulhern D."/>
            <person name="Wang Y."/>
            <person name="Lee K.A."/>
            <person name="Yang V."/>
            <person name="Aguiar M."/>
            <person name="Kornhauser J."/>
            <person name="Jia X."/>
            <person name="Ren J."/>
            <person name="Beausoleil S.A."/>
            <person name="Silva J.C."/>
            <person name="Vemulapalli V."/>
            <person name="Bedford M.T."/>
            <person name="Comb M.J."/>
        </authorList>
    </citation>
    <scope>METHYLATION [LARGE SCALE ANALYSIS] AT ARG-203; ARG-213; ARG-228; ARG-238; ARG-266; ARG-325 AND ARG-350</scope>
    <scope>IDENTIFICATION BY MASS SPECTROMETRY [LARGE SCALE ANALYSIS]</scope>
    <source>
        <tissue>Colon carcinoma</tissue>
    </source>
</reference>
<reference key="43">
    <citation type="journal article" date="2014" name="Nat. Struct. Mol. Biol.">
        <title>Uncovering global SUMOylation signaling networks in a site-specific manner.</title>
        <authorList>
            <person name="Hendriks I.A."/>
            <person name="D'Souza R.C."/>
            <person name="Yang B."/>
            <person name="Verlaan-de Vries M."/>
            <person name="Mann M."/>
            <person name="Vertegaal A.C."/>
        </authorList>
    </citation>
    <scope>SUMOYLATION [LARGE SCALE ANALYSIS] AT LYS-120 AND LYS-186</scope>
    <scope>IDENTIFICATION BY MASS SPECTROMETRY [LARGE SCALE ANALYSIS]</scope>
</reference>
<reference key="44">
    <citation type="journal article" date="2015" name="Brain">
        <title>Peptidylprolyl isomerase A governs TARDBP function and assembly in heterogeneous nuclear ribonucleoprotein complexes.</title>
        <authorList>
            <person name="Lauranzano E."/>
            <person name="Pozzi S."/>
            <person name="Pasetto L."/>
            <person name="Stucchi R."/>
            <person name="Massignan T."/>
            <person name="Paolella K."/>
            <person name="Mombrini M."/>
            <person name="Nardo G."/>
            <person name="Lunetta C."/>
            <person name="Corbo M."/>
            <person name="Mora G."/>
            <person name="Bendotti C."/>
            <person name="Bonetto V."/>
        </authorList>
    </citation>
    <scope>INTERACTION WITH PPIA</scope>
</reference>
<reference key="45">
    <citation type="journal article" date="2015" name="Cell">
        <title>The LC domain of hnRNPA2 adopts similar conformations in hydrogel polymers, liquid-like droplets, and nuclei.</title>
        <authorList>
            <person name="Xiang S."/>
            <person name="Kato M."/>
            <person name="Wu L.C."/>
            <person name="Lin Y."/>
            <person name="Ding M."/>
            <person name="Zhang Y."/>
            <person name="Yu Y."/>
            <person name="McKnight S.L."/>
        </authorList>
    </citation>
    <scope>DOMAIN</scope>
    <scope>MUTAGENESIS OF PHE-207; PHE-209; PHE-219; PHE-227; TYR-234; PHE-240; TYR-244; TYR-247; PHE-256; TYR-262; TYR-269; TYR-276; TYR-283; TYR-287; TYR-290; TYR-295; TYR-300; PHE-303; TYR-306; TYR-313; PHE-321; TYR-331; TYR-336; TYR-347 AND TYR-353</scope>
</reference>
<reference key="46">
    <citation type="journal article" date="2015" name="Cell">
        <title>HNRNPA2B1 is a mediator of m(6)A-dependent nuclear RNA processing events.</title>
        <authorList>
            <person name="Alarcon C.R."/>
            <person name="Goodarzi H."/>
            <person name="Lee H."/>
            <person name="Liu X."/>
            <person name="Tavazoie S."/>
            <person name="Tavazoie S.F."/>
        </authorList>
    </citation>
    <scope>FUNCTION</scope>
    <scope>MIRNA-BINDING</scope>
    <scope>INTERACTION WITH DGCR8</scope>
</reference>
<reference key="47">
    <citation type="journal article" date="2015" name="Mol. Cell. Proteomics">
        <title>System-wide analysis of SUMOylation dynamics in response to replication stress reveals novel small ubiquitin-like modified target proteins and acceptor lysines relevant for genome stability.</title>
        <authorList>
            <person name="Xiao Z."/>
            <person name="Chang J.G."/>
            <person name="Hendriks I.A."/>
            <person name="Sigurdsson J.O."/>
            <person name="Olsen J.V."/>
            <person name="Vertegaal A.C."/>
        </authorList>
    </citation>
    <scope>SUMOYLATION [LARGE SCALE ANALYSIS] AT LYS-120</scope>
    <scope>IDENTIFICATION BY MASS SPECTROMETRY [LARGE SCALE ANALYSIS]</scope>
</reference>
<reference key="48">
    <citation type="journal article" date="2015" name="Proteomics">
        <title>N-terminome analysis of the human mitochondrial proteome.</title>
        <authorList>
            <person name="Vaca Jacome A.S."/>
            <person name="Rabilloud T."/>
            <person name="Schaeffer-Reiss C."/>
            <person name="Rompais M."/>
            <person name="Ayoub D."/>
            <person name="Lane L."/>
            <person name="Bairoch A."/>
            <person name="Van Dorsselaer A."/>
            <person name="Carapito C."/>
        </authorList>
    </citation>
    <scope>IDENTIFICATION BY MASS SPECTROMETRY [LARGE SCALE ANALYSIS]</scope>
</reference>
<reference key="49">
    <citation type="journal article" date="2017" name="Nat. Struct. Mol. Biol.">
        <title>Site-specific mapping of the human SUMO proteome reveals co-modification with phosphorylation.</title>
        <authorList>
            <person name="Hendriks I.A."/>
            <person name="Lyon D."/>
            <person name="Young C."/>
            <person name="Jensen L.J."/>
            <person name="Vertegaal A.C."/>
            <person name="Nielsen M.L."/>
        </authorList>
    </citation>
    <scope>SUMOYLATION [LARGE SCALE ANALYSIS] AT LYS-22; LYS-104; LYS-112; LYS-120; LYS-137; LYS-152; LYS-168 AND LYS-173</scope>
    <scope>SUMOYLATION [LARGE SCALE ANALYSIS] AT LYS-5 (ISOFORM A2)</scope>
    <scope>IDENTIFICATION BY MASS SPECTROMETRY [LARGE SCALE ANALYSIS]</scope>
</reference>
<reference key="50">
    <citation type="journal article" date="2019" name="Science">
        <title>Nuclear hnRNPA2B1 initiates and amplifies the innate immune response to DNA viruses.</title>
        <authorList>
            <person name="Wang L."/>
            <person name="Wen M."/>
            <person name="Cao X."/>
        </authorList>
    </citation>
    <scope>FUNCTION</scope>
    <scope>SUBUNIT</scope>
    <scope>INTERACTION WITH TBK1; STING1 AND SRC</scope>
    <scope>SUBCELLULAR LOCATION</scope>
    <scope>MUTAGENESIS OF ARG-228</scope>
    <scope>METHYLATION AT ARG-228</scope>
</reference>
<reference key="51">
    <citation type="journal article" date="2023" name="Elife">
        <title>FAM76B regulates NF-kappaB-mediated inflammatory pathway by influencing the translocation of hnRNPA2B1.</title>
        <authorList>
            <person name="Wang D."/>
            <person name="Zheng X."/>
            <person name="Chai L."/>
            <person name="Zhao J."/>
            <person name="Zhu J."/>
            <person name="Li Y."/>
            <person name="Yang P."/>
            <person name="Mao Q."/>
            <person name="Xia H."/>
        </authorList>
    </citation>
    <scope>INTERACTION WITH FAM76B; NFKBIA AND NFKBIE</scope>
    <scope>SUBCELLULAR LOCATION</scope>
</reference>
<reference key="52">
    <citation type="submission" date="2005-11" db="PDB data bank">
        <title>Solution structure of RRM domain in heterogeneous nuclear ribonucleoproteins A2/B1.</title>
        <authorList>
            <consortium name="RIKEN structural genomics initiative (RSGI)"/>
        </authorList>
    </citation>
    <scope>STRUCTURE BY NMR OF 1-103</scope>
</reference>
<reference key="53">
    <citation type="journal article" date="2013" name="Nature">
        <title>Mutations in prion-like domains in hnRNPA2B1 and hnRNPA1 cause multisystem proteinopathy and ALS.</title>
        <authorList>
            <person name="Kim H.J."/>
            <person name="Kim N.C."/>
            <person name="Wang Y.D."/>
            <person name="Scarborough E.A."/>
            <person name="Moore J."/>
            <person name="Diaz Z."/>
            <person name="MacLea K.S."/>
            <person name="Freibaum B."/>
            <person name="Li S."/>
            <person name="Molliex A."/>
            <person name="Kanagaraj A.P."/>
            <person name="Carter R."/>
            <person name="Boylan K.B."/>
            <person name="Wojtas A.M."/>
            <person name="Rademakers R."/>
            <person name="Pinkus J.L."/>
            <person name="Greenberg S.A."/>
            <person name="Trojanowski J.Q."/>
            <person name="Traynor B.J."/>
            <person name="Smith B.N."/>
            <person name="Topp S."/>
            <person name="Gkazi A.S."/>
            <person name="Miller J."/>
            <person name="Shaw C.E."/>
            <person name="Kottlors M."/>
            <person name="Kirschner J."/>
            <person name="Pestronk A."/>
            <person name="Li Y.R."/>
            <person name="Ford A.F."/>
            <person name="Gitler A.D."/>
            <person name="Benatar M."/>
            <person name="King O.D."/>
            <person name="Kimonis V.E."/>
            <person name="Ross E.D."/>
            <person name="Weihl C.C."/>
            <person name="Shorter J."/>
            <person name="Taylor J.P."/>
        </authorList>
    </citation>
    <scope>VARIANT IBMPFD2 VAL-302</scope>
</reference>
<reference key="54">
    <citation type="journal article" date="2022" name="Nat. Commun.">
        <title>Heterozygous frameshift variants in HNRNPA2B1 cause early-onset oculopharyngeal muscular dystrophy.</title>
        <authorList>
            <person name="Kim H.J."/>
            <person name="Mohassel P."/>
            <person name="Donkervoort S."/>
            <person name="Guo L."/>
            <person name="O'Donovan K."/>
            <person name="Coughlin M."/>
            <person name="Lornage X."/>
            <person name="Foulds N."/>
            <person name="Hammans S.R."/>
            <person name="Foley A.R."/>
            <person name="Fare C.M."/>
            <person name="Ford A.F."/>
            <person name="Ogasawara M."/>
            <person name="Sato A."/>
            <person name="Iida A."/>
            <person name="Munot P."/>
            <person name="Ambegaonkar G."/>
            <person name="Phadke R."/>
            <person name="O'Donovan D.G."/>
            <person name="Buchert R."/>
            <person name="Grimmel M."/>
            <person name="Toepf A."/>
            <person name="Zaharieva I.T."/>
            <person name="Brady L."/>
            <person name="Hu Y."/>
            <person name="Lloyd T.E."/>
            <person name="Klein A."/>
            <person name="Steinlin M."/>
            <person name="Kuster A."/>
            <person name="Mercier S."/>
            <person name="Marcorelles P."/>
            <person name="Pereon Y."/>
            <person name="Fleurence E."/>
            <person name="Manzur A."/>
            <person name="Ennis S."/>
            <person name="Upstill-Goddard R."/>
            <person name="Bello L."/>
            <person name="Bertolin C."/>
            <person name="Pegoraro E."/>
            <person name="Salviati L."/>
            <person name="French C.E."/>
            <person name="Shatillo A."/>
            <person name="Raymond F.L."/>
            <person name="Haack T.B."/>
            <person name="Quijano-Roy S."/>
            <person name="Boehm J."/>
            <person name="Nelson I."/>
            <person name="Stojkovic T."/>
            <person name="Evangelista T."/>
            <person name="Straub V."/>
            <person name="Romero N.B."/>
            <person name="Laporte J."/>
            <person name="Muntoni F."/>
            <person name="Nishino I."/>
            <person name="Tarnopolsky M.A."/>
            <person name="Shorter J."/>
            <person name="Boennemann C.G."/>
            <person name="Taylor J.P."/>
        </authorList>
    </citation>
    <scope>INVOLVEMENT IN OPMD2</scope>
</reference>
<organism>
    <name type="scientific">Homo sapiens</name>
    <name type="common">Human</name>
    <dbReference type="NCBI Taxonomy" id="9606"/>
    <lineage>
        <taxon>Eukaryota</taxon>
        <taxon>Metazoa</taxon>
        <taxon>Chordata</taxon>
        <taxon>Craniata</taxon>
        <taxon>Vertebrata</taxon>
        <taxon>Euteleostomi</taxon>
        <taxon>Mammalia</taxon>
        <taxon>Eutheria</taxon>
        <taxon>Euarchontoglires</taxon>
        <taxon>Primates</taxon>
        <taxon>Haplorrhini</taxon>
        <taxon>Catarrhini</taxon>
        <taxon>Hominidae</taxon>
        <taxon>Homo</taxon>
    </lineage>
</organism>
<dbReference type="EMBL" id="M29064">
    <property type="protein sequence ID" value="AAA60271.1"/>
    <property type="molecule type" value="mRNA"/>
</dbReference>
<dbReference type="EMBL" id="M29065">
    <property type="protein sequence ID" value="AAA36574.1"/>
    <property type="molecule type" value="mRNA"/>
</dbReference>
<dbReference type="EMBL" id="U09123">
    <property type="protein sequence ID" value="AAB60650.1"/>
    <property type="molecule type" value="Genomic_DNA"/>
</dbReference>
<dbReference type="EMBL" id="U09120">
    <property type="protein sequence ID" value="AAB60650.1"/>
    <property type="status" value="JOINED"/>
    <property type="molecule type" value="Genomic_DNA"/>
</dbReference>
<dbReference type="EMBL" id="U09121">
    <property type="protein sequence ID" value="AAB60650.1"/>
    <property type="status" value="JOINED"/>
    <property type="molecule type" value="Genomic_DNA"/>
</dbReference>
<dbReference type="EMBL" id="U09122">
    <property type="protein sequence ID" value="AAB60650.1"/>
    <property type="status" value="JOINED"/>
    <property type="molecule type" value="Genomic_DNA"/>
</dbReference>
<dbReference type="EMBL" id="D28877">
    <property type="protein sequence ID" value="BAA06031.1"/>
    <property type="molecule type" value="Genomic_DNA"/>
</dbReference>
<dbReference type="EMBL" id="D28877">
    <property type="protein sequence ID" value="BAA06032.1"/>
    <property type="molecule type" value="Genomic_DNA"/>
</dbReference>
<dbReference type="EMBL" id="AK289429">
    <property type="protein sequence ID" value="BAF82118.1"/>
    <property type="molecule type" value="mRNA"/>
</dbReference>
<dbReference type="EMBL" id="CH471073">
    <property type="protein sequence ID" value="EAW93835.1"/>
    <property type="molecule type" value="Genomic_DNA"/>
</dbReference>
<dbReference type="EMBL" id="CH471073">
    <property type="protein sequence ID" value="EAW93836.1"/>
    <property type="molecule type" value="Genomic_DNA"/>
</dbReference>
<dbReference type="EMBL" id="CH471073">
    <property type="protein sequence ID" value="EAW93837.1"/>
    <property type="molecule type" value="Genomic_DNA"/>
</dbReference>
<dbReference type="EMBL" id="CH471073">
    <property type="protein sequence ID" value="EAW93839.1"/>
    <property type="molecule type" value="Genomic_DNA"/>
</dbReference>
<dbReference type="CCDS" id="CCDS43557.1">
    <molecule id="P22626-1"/>
</dbReference>
<dbReference type="CCDS" id="CCDS5397.1">
    <molecule id="P22626-2"/>
</dbReference>
<dbReference type="PIR" id="A56845">
    <property type="entry name" value="B34504"/>
</dbReference>
<dbReference type="RefSeq" id="NP_002128.1">
    <molecule id="P22626-2"/>
    <property type="nucleotide sequence ID" value="NM_002137.4"/>
</dbReference>
<dbReference type="RefSeq" id="NP_112533.1">
    <molecule id="P22626-1"/>
    <property type="nucleotide sequence ID" value="NM_031243.3"/>
</dbReference>
<dbReference type="RefSeq" id="XP_005249786.1">
    <molecule id="P22626-1"/>
    <property type="nucleotide sequence ID" value="XM_005249729.2"/>
</dbReference>
<dbReference type="RefSeq" id="XP_016867598.1">
    <molecule id="P22626-2"/>
    <property type="nucleotide sequence ID" value="XM_017012109.3"/>
</dbReference>
<dbReference type="RefSeq" id="XP_016867599.1">
    <molecule id="P22626-2"/>
    <property type="nucleotide sequence ID" value="XM_017012110.3"/>
</dbReference>
<dbReference type="RefSeq" id="XP_047276254.1">
    <molecule id="P22626-1"/>
    <property type="nucleotide sequence ID" value="XM_047420298.1"/>
</dbReference>
<dbReference type="RefSeq" id="XP_047276255.1">
    <molecule id="P22626-1"/>
    <property type="nucleotide sequence ID" value="XM_047420299.1"/>
</dbReference>
<dbReference type="RefSeq" id="XP_047276256.1">
    <molecule id="P22626-2"/>
    <property type="nucleotide sequence ID" value="XM_047420300.1"/>
</dbReference>
<dbReference type="RefSeq" id="XP_054214031.1">
    <molecule id="P22626-1"/>
    <property type="nucleotide sequence ID" value="XM_054358056.1"/>
</dbReference>
<dbReference type="RefSeq" id="XP_054214032.1">
    <molecule id="P22626-1"/>
    <property type="nucleotide sequence ID" value="XM_054358057.1"/>
</dbReference>
<dbReference type="RefSeq" id="XP_054214033.1">
    <molecule id="P22626-1"/>
    <property type="nucleotide sequence ID" value="XM_054358058.1"/>
</dbReference>
<dbReference type="RefSeq" id="XP_054214034.1">
    <molecule id="P22626-2"/>
    <property type="nucleotide sequence ID" value="XM_054358059.1"/>
</dbReference>
<dbReference type="RefSeq" id="XP_054214035.1">
    <molecule id="P22626-2"/>
    <property type="nucleotide sequence ID" value="XM_054358060.1"/>
</dbReference>
<dbReference type="RefSeq" id="XP_054214036.1">
    <molecule id="P22626-2"/>
    <property type="nucleotide sequence ID" value="XM_054358061.1"/>
</dbReference>
<dbReference type="PDB" id="1X4B">
    <property type="method" value="NMR"/>
    <property type="chains" value="A=1-103"/>
</dbReference>
<dbReference type="PDB" id="5EN1">
    <property type="method" value="X-ray"/>
    <property type="resolution" value="2.58 A"/>
    <property type="chains" value="A=12-195"/>
</dbReference>
<dbReference type="PDB" id="5HO4">
    <property type="method" value="X-ray"/>
    <property type="resolution" value="1.85 A"/>
    <property type="chains" value="A=15-193"/>
</dbReference>
<dbReference type="PDB" id="5WWE">
    <property type="method" value="X-ray"/>
    <property type="resolution" value="2.40 A"/>
    <property type="chains" value="A=12-195"/>
</dbReference>
<dbReference type="PDB" id="5WWF">
    <property type="method" value="X-ray"/>
    <property type="resolution" value="2.15 A"/>
    <property type="chains" value="A/C=12-195"/>
</dbReference>
<dbReference type="PDB" id="5WWG">
    <property type="method" value="X-ray"/>
    <property type="resolution" value="2.03 A"/>
    <property type="chains" value="A=12-195"/>
</dbReference>
<dbReference type="PDB" id="6WPQ">
    <property type="method" value="X-ray"/>
    <property type="resolution" value="1.10 A"/>
    <property type="chains" value="A=298-303"/>
</dbReference>
<dbReference type="PDB" id="6WQK">
    <property type="method" value="EM"/>
    <property type="resolution" value="3.10 A"/>
    <property type="chains" value="A/B/C/D/E=193-353"/>
</dbReference>
<dbReference type="PDB" id="7WM3">
    <property type="method" value="X-ray"/>
    <property type="resolution" value="1.62 A"/>
    <property type="chains" value="A/B/C/D=15-193"/>
</dbReference>
<dbReference type="PDB" id="8DU2">
    <property type="method" value="EM"/>
    <property type="resolution" value="3.30 A"/>
    <property type="chains" value="A/B/C/D/E/F/G/H/I/J=193-353"/>
</dbReference>
<dbReference type="PDB" id="8DUW">
    <property type="method" value="EM"/>
    <property type="resolution" value="3.20 A"/>
    <property type="chains" value="A/B/C/D/E/F/G/H/I/J=193-353"/>
</dbReference>
<dbReference type="PDB" id="8EC7">
    <property type="method" value="EM"/>
    <property type="resolution" value="3.90 A"/>
    <property type="chains" value="A/B/C/D/E/F/G/H/I/J/K/L/M/N/O=193-353"/>
</dbReference>
<dbReference type="PDB" id="8HNI">
    <property type="method" value="X-ray"/>
    <property type="resolution" value="2.64 A"/>
    <property type="chains" value="A/B/C/D/E/F/G/H/I/J/K/L=15-193"/>
</dbReference>
<dbReference type="PDBsum" id="1X4B"/>
<dbReference type="PDBsum" id="5EN1"/>
<dbReference type="PDBsum" id="5HO4"/>
<dbReference type="PDBsum" id="5WWE"/>
<dbReference type="PDBsum" id="5WWF"/>
<dbReference type="PDBsum" id="5WWG"/>
<dbReference type="PDBsum" id="6WPQ"/>
<dbReference type="PDBsum" id="6WQK"/>
<dbReference type="PDBsum" id="7WM3"/>
<dbReference type="PDBsum" id="8DU2"/>
<dbReference type="PDBsum" id="8DUW"/>
<dbReference type="PDBsum" id="8EC7"/>
<dbReference type="PDBsum" id="8HNI"/>
<dbReference type="EMDB" id="EMD-21871"/>
<dbReference type="EMDB" id="EMD-27713"/>
<dbReference type="EMDB" id="EMD-27728"/>
<dbReference type="EMDB" id="EMD-28014"/>
<dbReference type="SMR" id="P22626"/>
<dbReference type="BioGRID" id="109422">
    <property type="interactions" value="797"/>
</dbReference>
<dbReference type="CORUM" id="P22626"/>
<dbReference type="DIP" id="DIP-32877N"/>
<dbReference type="FunCoup" id="P22626">
    <property type="interactions" value="3584"/>
</dbReference>
<dbReference type="IntAct" id="P22626">
    <property type="interactions" value="293"/>
</dbReference>
<dbReference type="MINT" id="P22626"/>
<dbReference type="STRING" id="9606.ENSP00000346694"/>
<dbReference type="ChEMBL" id="CHEMBL3124741"/>
<dbReference type="DrugBank" id="DB11638">
    <property type="generic name" value="Artenimol"/>
</dbReference>
<dbReference type="DrugBank" id="DB09130">
    <property type="generic name" value="Copper"/>
</dbReference>
<dbReference type="GlyCosmos" id="P22626">
    <property type="glycosylation" value="2 sites, 2 glycans"/>
</dbReference>
<dbReference type="GlyGen" id="P22626">
    <property type="glycosylation" value="2 sites, 2 O-linked glycans (2 sites)"/>
</dbReference>
<dbReference type="iPTMnet" id="P22626"/>
<dbReference type="MetOSite" id="P22626"/>
<dbReference type="PhosphoSitePlus" id="P22626"/>
<dbReference type="SwissPalm" id="P22626"/>
<dbReference type="BioMuta" id="HNRNPA2B1"/>
<dbReference type="DMDM" id="133257"/>
<dbReference type="REPRODUCTION-2DPAGE" id="IPI00396378"/>
<dbReference type="REPRODUCTION-2DPAGE" id="IPI00414696"/>
<dbReference type="REPRODUCTION-2DPAGE" id="P22626"/>
<dbReference type="jPOST" id="P22626"/>
<dbReference type="MassIVE" id="P22626"/>
<dbReference type="PaxDb" id="9606-ENSP00000346694"/>
<dbReference type="PeptideAtlas" id="P22626"/>
<dbReference type="ProteomicsDB" id="54010">
    <molecule id="P22626-1"/>
</dbReference>
<dbReference type="ProteomicsDB" id="54011">
    <molecule id="P22626-2"/>
</dbReference>
<dbReference type="Pumba" id="P22626"/>
<dbReference type="TopDownProteomics" id="P22626-1">
    <molecule id="P22626-1"/>
</dbReference>
<dbReference type="TopDownProteomics" id="P22626-2">
    <molecule id="P22626-2"/>
</dbReference>
<dbReference type="Antibodypedia" id="3240">
    <property type="antibodies" value="465 antibodies from 34 providers"/>
</dbReference>
<dbReference type="DNASU" id="3181"/>
<dbReference type="Ensembl" id="ENST00000354667.8">
    <molecule id="P22626-1"/>
    <property type="protein sequence ID" value="ENSP00000346694.4"/>
    <property type="gene ID" value="ENSG00000122566.23"/>
</dbReference>
<dbReference type="Ensembl" id="ENST00000356674.8">
    <molecule id="P22626-1"/>
    <property type="protein sequence ID" value="ENSP00000349101.8"/>
    <property type="gene ID" value="ENSG00000122566.23"/>
</dbReference>
<dbReference type="Ensembl" id="ENST00000360787.8">
    <molecule id="P22626-1"/>
    <property type="protein sequence ID" value="ENSP00000354021.4"/>
    <property type="gene ID" value="ENSG00000122566.23"/>
</dbReference>
<dbReference type="Ensembl" id="ENST00000608362.2">
    <molecule id="P22626-2"/>
    <property type="protein sequence ID" value="ENSP00000497298.1"/>
    <property type="gene ID" value="ENSG00000122566.23"/>
</dbReference>
<dbReference type="Ensembl" id="ENST00000618183.5">
    <molecule id="P22626-2"/>
    <property type="protein sequence ID" value="ENSP00000478691.2"/>
    <property type="gene ID" value="ENSG00000122566.23"/>
</dbReference>
<dbReference type="Ensembl" id="ENST00000676497.1">
    <molecule id="P22626-2"/>
    <property type="protein sequence ID" value="ENSP00000503836.1"/>
    <property type="gene ID" value="ENSG00000122566.23"/>
</dbReference>
<dbReference type="Ensembl" id="ENST00000676524.1">
    <molecule id="P22626-2"/>
    <property type="protein sequence ID" value="ENSP00000504831.1"/>
    <property type="gene ID" value="ENSG00000122566.23"/>
</dbReference>
<dbReference type="Ensembl" id="ENST00000676746.1">
    <molecule id="P22626-1"/>
    <property type="protein sequence ID" value="ENSP00000504329.1"/>
    <property type="gene ID" value="ENSG00000122566.23"/>
</dbReference>
<dbReference type="Ensembl" id="ENST00000676749.1">
    <molecule id="P22626-2"/>
    <property type="protein sequence ID" value="ENSP00000504799.1"/>
    <property type="gene ID" value="ENSG00000122566.23"/>
</dbReference>
<dbReference type="Ensembl" id="ENST00000676903.1">
    <molecule id="P22626-2"/>
    <property type="protein sequence ID" value="ENSP00000504660.1"/>
    <property type="gene ID" value="ENSG00000122566.23"/>
</dbReference>
<dbReference type="Ensembl" id="ENST00000677339.1">
    <molecule id="P22626-2"/>
    <property type="protein sequence ID" value="ENSP00000503242.1"/>
    <property type="gene ID" value="ENSG00000122566.23"/>
</dbReference>
<dbReference type="Ensembl" id="ENST00000677396.1">
    <molecule id="P22626-2"/>
    <property type="protein sequence ID" value="ENSP00000503703.1"/>
    <property type="gene ID" value="ENSG00000122566.23"/>
</dbReference>
<dbReference type="Ensembl" id="ENST00000677574.1">
    <molecule id="P22626-2"/>
    <property type="protein sequence ID" value="ENSP00000503021.1"/>
    <property type="gene ID" value="ENSG00000122566.23"/>
</dbReference>
<dbReference type="Ensembl" id="ENST00000677631.1">
    <molecule id="P22626-2"/>
    <property type="protein sequence ID" value="ENSP00000503452.1"/>
    <property type="gene ID" value="ENSG00000122566.23"/>
</dbReference>
<dbReference type="Ensembl" id="ENST00000677656.1">
    <molecule id="P22626-2"/>
    <property type="protein sequence ID" value="ENSP00000503060.1"/>
    <property type="gene ID" value="ENSG00000122566.23"/>
</dbReference>
<dbReference type="Ensembl" id="ENST00000677839.1">
    <molecule id="P22626-2"/>
    <property type="protein sequence ID" value="ENSP00000504439.1"/>
    <property type="gene ID" value="ENSG00000122566.23"/>
</dbReference>
<dbReference type="Ensembl" id="ENST00000677906.1">
    <molecule id="P22626-2"/>
    <property type="protein sequence ID" value="ENSP00000503870.1"/>
    <property type="gene ID" value="ENSG00000122566.23"/>
</dbReference>
<dbReference type="Ensembl" id="ENST00000678431.1">
    <molecule id="P22626-2"/>
    <property type="protein sequence ID" value="ENSP00000503833.1"/>
    <property type="gene ID" value="ENSG00000122566.23"/>
</dbReference>
<dbReference type="Ensembl" id="ENST00000678449.1">
    <molecule id="P22626-2"/>
    <property type="protein sequence ID" value="ENSP00000503375.1"/>
    <property type="gene ID" value="ENSG00000122566.23"/>
</dbReference>
<dbReference type="Ensembl" id="ENST00000678501.1">
    <molecule id="P22626-2"/>
    <property type="protein sequence ID" value="ENSP00000503961.1"/>
    <property type="gene ID" value="ENSG00000122566.23"/>
</dbReference>
<dbReference type="Ensembl" id="ENST00000678675.1">
    <molecule id="P22626-1"/>
    <property type="protein sequence ID" value="ENSP00000503476.1"/>
    <property type="gene ID" value="ENSG00000122566.23"/>
</dbReference>
<dbReference type="Ensembl" id="ENST00000678697.1">
    <molecule id="P22626-2"/>
    <property type="protein sequence ID" value="ENSP00000503047.1"/>
    <property type="gene ID" value="ENSG00000122566.23"/>
</dbReference>
<dbReference type="Ensembl" id="ENST00000678779.1">
    <molecule id="P22626-2"/>
    <property type="protein sequence ID" value="ENSP00000503429.1"/>
    <property type="gene ID" value="ENSG00000122566.23"/>
</dbReference>
<dbReference type="Ensembl" id="ENST00000678884.1">
    <molecule id="P22626-2"/>
    <property type="protein sequence ID" value="ENSP00000503501.1"/>
    <property type="gene ID" value="ENSG00000122566.23"/>
</dbReference>
<dbReference type="Ensembl" id="ENST00000678935.1">
    <molecule id="P22626-2"/>
    <property type="protein sequence ID" value="ENSP00000504023.1"/>
    <property type="gene ID" value="ENSG00000122566.23"/>
</dbReference>
<dbReference type="Ensembl" id="ENST00000678962.1">
    <molecule id="P22626-2"/>
    <property type="protein sequence ID" value="ENSP00000504721.1"/>
    <property type="gene ID" value="ENSG00000122566.23"/>
</dbReference>
<dbReference type="Ensembl" id="ENST00000678998.1">
    <molecule id="P22626-2"/>
    <property type="protein sequence ID" value="ENSP00000503460.1"/>
    <property type="gene ID" value="ENSG00000122566.23"/>
</dbReference>
<dbReference type="Ensembl" id="ENST00000679001.1">
    <molecule id="P22626-1"/>
    <property type="protein sequence ID" value="ENSP00000503514.1"/>
    <property type="gene ID" value="ENSG00000122566.23"/>
</dbReference>
<dbReference type="Ensembl" id="ENST00000679021.1">
    <molecule id="P22626-1"/>
    <property type="protein sequence ID" value="ENSP00000503885.1"/>
    <property type="gene ID" value="ENSG00000122566.23"/>
</dbReference>
<dbReference type="Ensembl" id="ENST00000679123.1">
    <molecule id="P22626-1"/>
    <property type="protein sequence ID" value="ENSP00000503360.1"/>
    <property type="gene ID" value="ENSG00000122566.23"/>
</dbReference>
<dbReference type="Ensembl" id="ENST00000679243.1">
    <molecule id="P22626-2"/>
    <property type="protein sequence ID" value="ENSP00000504415.1"/>
    <property type="gene ID" value="ENSG00000122566.23"/>
</dbReference>
<dbReference type="Ensembl" id="ENST00000679318.1">
    <molecule id="P22626-2"/>
    <property type="protein sequence ID" value="ENSP00000504571.1"/>
    <property type="gene ID" value="ENSG00000122566.23"/>
</dbReference>
<dbReference type="GeneID" id="3181"/>
<dbReference type="KEGG" id="hsa:3181"/>
<dbReference type="MANE-Select" id="ENST00000618183.5">
    <molecule id="P22626-2"/>
    <property type="protein sequence ID" value="ENSP00000478691.2"/>
    <property type="RefSeq nucleotide sequence ID" value="NM_002137.4"/>
    <property type="RefSeq protein sequence ID" value="NP_002128.1"/>
</dbReference>
<dbReference type="UCSC" id="uc003sxr.5">
    <molecule id="P22626-1"/>
    <property type="organism name" value="human"/>
</dbReference>
<dbReference type="AGR" id="HGNC:5033"/>
<dbReference type="CTD" id="3181"/>
<dbReference type="DisGeNET" id="3181"/>
<dbReference type="GeneCards" id="HNRNPA2B1"/>
<dbReference type="GeneReviews" id="HNRNPA2B1"/>
<dbReference type="HGNC" id="HGNC:5033">
    <property type="gene designation" value="HNRNPA2B1"/>
</dbReference>
<dbReference type="HPA" id="ENSG00000122566">
    <property type="expression patterns" value="Low tissue specificity"/>
</dbReference>
<dbReference type="MalaCards" id="HNRNPA2B1"/>
<dbReference type="MIM" id="600124">
    <property type="type" value="gene"/>
</dbReference>
<dbReference type="MIM" id="615422">
    <property type="type" value="phenotype"/>
</dbReference>
<dbReference type="MIM" id="620460">
    <property type="type" value="phenotype"/>
</dbReference>
<dbReference type="neXtProt" id="NX_P22626"/>
<dbReference type="OpenTargets" id="ENSG00000122566"/>
<dbReference type="Orphanet" id="52430">
    <property type="disease" value="Inclusion body myopathy with Paget disease of bone and frontotemporal dementia"/>
</dbReference>
<dbReference type="PharmGKB" id="PA162391140"/>
<dbReference type="VEuPathDB" id="HostDB:ENSG00000122566"/>
<dbReference type="eggNOG" id="KOG0118">
    <property type="taxonomic scope" value="Eukaryota"/>
</dbReference>
<dbReference type="GeneTree" id="ENSGT00940000154431"/>
<dbReference type="HOGENOM" id="CLU_012062_1_0_1"/>
<dbReference type="InParanoid" id="P22626"/>
<dbReference type="OMA" id="MDFNRYM"/>
<dbReference type="OrthoDB" id="1875751at2759"/>
<dbReference type="PAN-GO" id="P22626">
    <property type="GO annotations" value="5 GO annotations based on evolutionary models"/>
</dbReference>
<dbReference type="PhylomeDB" id="P22626"/>
<dbReference type="TreeFam" id="TF351342"/>
<dbReference type="PathwayCommons" id="P22626"/>
<dbReference type="Reactome" id="R-HSA-72163">
    <property type="pathway name" value="mRNA Splicing - Major Pathway"/>
</dbReference>
<dbReference type="Reactome" id="R-HSA-72203">
    <property type="pathway name" value="Processing of Capped Intron-Containing Pre-mRNA"/>
</dbReference>
<dbReference type="Reactome" id="R-HSA-8950505">
    <property type="pathway name" value="Gene and protein expression by JAK-STAT signaling after Interleukin-12 stimulation"/>
</dbReference>
<dbReference type="SignaLink" id="P22626"/>
<dbReference type="SIGNOR" id="P22626"/>
<dbReference type="BioGRID-ORCS" id="3181">
    <property type="hits" value="210 hits in 1176 CRISPR screens"/>
</dbReference>
<dbReference type="CD-CODE" id="232F8A39">
    <property type="entry name" value="P-body"/>
</dbReference>
<dbReference type="CD-CODE" id="2612F8DB">
    <property type="entry name" value="Synthetic Condensate 000313"/>
</dbReference>
<dbReference type="CD-CODE" id="2C224C76">
    <property type="entry name" value="Synthetic Condensate 000284"/>
</dbReference>
<dbReference type="CD-CODE" id="5506006C">
    <property type="entry name" value="Synthetic Condensate 000177"/>
</dbReference>
<dbReference type="CD-CODE" id="6209F224">
    <property type="entry name" value="Synthetic Condensate 000281"/>
</dbReference>
<dbReference type="CD-CODE" id="804901D1">
    <property type="entry name" value="Nuclear speckle"/>
</dbReference>
<dbReference type="CD-CODE" id="85C30F04">
    <property type="entry name" value="Synthetic Condensate 000057"/>
</dbReference>
<dbReference type="CD-CODE" id="91857CE7">
    <property type="entry name" value="Nucleolus"/>
</dbReference>
<dbReference type="CD-CODE" id="92722620">
    <property type="entry name" value="Synthetic Condensate 000059"/>
</dbReference>
<dbReference type="CD-CODE" id="A3F53DF0">
    <property type="entry name" value="Synthetic Condensate 000272"/>
</dbReference>
<dbReference type="CD-CODE" id="DEE660B4">
    <property type="entry name" value="Stress granule"/>
</dbReference>
<dbReference type="CD-CODE" id="F85A2E29">
    <property type="entry name" value="IMP1 RNP granule"/>
</dbReference>
<dbReference type="ChiTaRS" id="HNRNPA2B1">
    <property type="organism name" value="human"/>
</dbReference>
<dbReference type="EvolutionaryTrace" id="P22626"/>
<dbReference type="GeneWiki" id="HNRPA2B1"/>
<dbReference type="GenomeRNAi" id="3181"/>
<dbReference type="Pharos" id="P22626">
    <property type="development level" value="Tbio"/>
</dbReference>
<dbReference type="PRO" id="PR:P22626"/>
<dbReference type="Proteomes" id="UP000005640">
    <property type="component" value="Chromosome 7"/>
</dbReference>
<dbReference type="RNAct" id="P22626">
    <property type="molecule type" value="protein"/>
</dbReference>
<dbReference type="Bgee" id="ENSG00000122566">
    <property type="expression patterns" value="Expressed in epithelium of nasopharynx and 215 other cell types or tissues"/>
</dbReference>
<dbReference type="ExpressionAtlas" id="P22626">
    <property type="expression patterns" value="baseline and differential"/>
</dbReference>
<dbReference type="GO" id="GO:0015030">
    <property type="term" value="C:Cajal body"/>
    <property type="evidence" value="ECO:0000250"/>
    <property type="project" value="BHF-UCL"/>
</dbReference>
<dbReference type="GO" id="GO:0071013">
    <property type="term" value="C:catalytic step 2 spliceosome"/>
    <property type="evidence" value="ECO:0000314"/>
    <property type="project" value="UniProtKB"/>
</dbReference>
<dbReference type="GO" id="GO:0000781">
    <property type="term" value="C:chromosome, telomeric region"/>
    <property type="evidence" value="ECO:0000250"/>
    <property type="project" value="BHF-UCL"/>
</dbReference>
<dbReference type="GO" id="GO:0005737">
    <property type="term" value="C:cytoplasm"/>
    <property type="evidence" value="ECO:0000314"/>
    <property type="project" value="UniProtKB"/>
</dbReference>
<dbReference type="GO" id="GO:0070062">
    <property type="term" value="C:extracellular exosome"/>
    <property type="evidence" value="ECO:0000314"/>
    <property type="project" value="UniProtKB"/>
</dbReference>
<dbReference type="GO" id="GO:0016020">
    <property type="term" value="C:membrane"/>
    <property type="evidence" value="ECO:0007005"/>
    <property type="project" value="UniProtKB"/>
</dbReference>
<dbReference type="GO" id="GO:0016363">
    <property type="term" value="C:nuclear matrix"/>
    <property type="evidence" value="ECO:0000250"/>
    <property type="project" value="BHF-UCL"/>
</dbReference>
<dbReference type="GO" id="GO:0005654">
    <property type="term" value="C:nucleoplasm"/>
    <property type="evidence" value="ECO:0000314"/>
    <property type="project" value="HPA"/>
</dbReference>
<dbReference type="GO" id="GO:0005634">
    <property type="term" value="C:nucleus"/>
    <property type="evidence" value="ECO:0000314"/>
    <property type="project" value="UniProtKB"/>
</dbReference>
<dbReference type="GO" id="GO:1990904">
    <property type="term" value="C:ribonucleoprotein complex"/>
    <property type="evidence" value="ECO:0000314"/>
    <property type="project" value="UniProtKB"/>
</dbReference>
<dbReference type="GO" id="GO:0005681">
    <property type="term" value="C:spliceosomal complex"/>
    <property type="evidence" value="ECO:0000314"/>
    <property type="project" value="HGNC-UCL"/>
</dbReference>
<dbReference type="GO" id="GO:0070182">
    <property type="term" value="F:DNA polymerase binding"/>
    <property type="evidence" value="ECO:0000250"/>
    <property type="project" value="ARUK-UCL"/>
</dbReference>
<dbReference type="GO" id="GO:0098505">
    <property type="term" value="F:G-rich strand telomeric DNA binding"/>
    <property type="evidence" value="ECO:0000250"/>
    <property type="project" value="BHF-UCL"/>
</dbReference>
<dbReference type="GO" id="GO:0042802">
    <property type="term" value="F:identical protein binding"/>
    <property type="evidence" value="ECO:0000353"/>
    <property type="project" value="IntAct"/>
</dbReference>
<dbReference type="GO" id="GO:0035198">
    <property type="term" value="F:miRNA binding"/>
    <property type="evidence" value="ECO:0000314"/>
    <property type="project" value="UniProtKB"/>
</dbReference>
<dbReference type="GO" id="GO:0140693">
    <property type="term" value="F:molecular condensate scaffold activity"/>
    <property type="evidence" value="ECO:0000314"/>
    <property type="project" value="DisProt"/>
</dbReference>
<dbReference type="GO" id="GO:0003730">
    <property type="term" value="F:mRNA 3'-UTR binding"/>
    <property type="evidence" value="ECO:0000314"/>
    <property type="project" value="UniProtKB"/>
</dbReference>
<dbReference type="GO" id="GO:1990247">
    <property type="term" value="F:N6-methyladenosine-containing RNA reader activity"/>
    <property type="evidence" value="ECO:0000314"/>
    <property type="project" value="UniProtKB"/>
</dbReference>
<dbReference type="GO" id="GO:0003723">
    <property type="term" value="F:RNA binding"/>
    <property type="evidence" value="ECO:0000314"/>
    <property type="project" value="HGNC-UCL"/>
</dbReference>
<dbReference type="GO" id="GO:0043047">
    <property type="term" value="F:single-stranded telomeric DNA binding"/>
    <property type="evidence" value="ECO:0000314"/>
    <property type="project" value="HGNC-UCL"/>
</dbReference>
<dbReference type="GO" id="GO:0032392">
    <property type="term" value="P:DNA geometric change"/>
    <property type="evidence" value="ECO:0000250"/>
    <property type="project" value="BHF-UCL"/>
</dbReference>
<dbReference type="GO" id="GO:1990428">
    <property type="term" value="P:miRNA transport"/>
    <property type="evidence" value="ECO:0000314"/>
    <property type="project" value="UniProtKB"/>
</dbReference>
<dbReference type="GO" id="GO:0006406">
    <property type="term" value="P:mRNA export from nucleus"/>
    <property type="evidence" value="ECO:0000314"/>
    <property type="project" value="UniProtKB"/>
</dbReference>
<dbReference type="GO" id="GO:0006397">
    <property type="term" value="P:mRNA processing"/>
    <property type="evidence" value="ECO:0000314"/>
    <property type="project" value="HGNC-UCL"/>
</dbReference>
<dbReference type="GO" id="GO:0000398">
    <property type="term" value="P:mRNA splicing, via spliceosome"/>
    <property type="evidence" value="ECO:0000315"/>
    <property type="project" value="UniProtKB"/>
</dbReference>
<dbReference type="GO" id="GO:0051028">
    <property type="term" value="P:mRNA transport"/>
    <property type="evidence" value="ECO:0000318"/>
    <property type="project" value="GO_Central"/>
</dbReference>
<dbReference type="GO" id="GO:1904358">
    <property type="term" value="P:positive regulation of telomere maintenance via telomere lengthening"/>
    <property type="evidence" value="ECO:0000250"/>
    <property type="project" value="BHF-UCL"/>
</dbReference>
<dbReference type="GO" id="GO:0031053">
    <property type="term" value="P:primary miRNA processing"/>
    <property type="evidence" value="ECO:0000314"/>
    <property type="project" value="UniProtKB"/>
</dbReference>
<dbReference type="GO" id="GO:0050658">
    <property type="term" value="P:RNA transport"/>
    <property type="evidence" value="ECO:0000314"/>
    <property type="project" value="HGNC-UCL"/>
</dbReference>
<dbReference type="CDD" id="cd12762">
    <property type="entry name" value="RRM1_hnRNPA2B1"/>
    <property type="match status" value="1"/>
</dbReference>
<dbReference type="CDD" id="cd12581">
    <property type="entry name" value="RRM2_hnRNPA2B1"/>
    <property type="match status" value="1"/>
</dbReference>
<dbReference type="DisProt" id="DP01109"/>
<dbReference type="FunFam" id="3.30.70.330:FF:000040">
    <property type="entry name" value="Heterogeneous nuclear ribonucleoprotein A2/B1"/>
    <property type="match status" value="1"/>
</dbReference>
<dbReference type="FunFam" id="3.30.70.330:FF:000108">
    <property type="entry name" value="Heterogeneous nuclear ribonucleoproteins A2/B1"/>
    <property type="match status" value="1"/>
</dbReference>
<dbReference type="Gene3D" id="3.30.70.330">
    <property type="match status" value="2"/>
</dbReference>
<dbReference type="InterPro" id="IPR021662">
    <property type="entry name" value="HnRNPA1/A2_C"/>
</dbReference>
<dbReference type="InterPro" id="IPR034486">
    <property type="entry name" value="hnRNPA2B1_RRM1"/>
</dbReference>
<dbReference type="InterPro" id="IPR012677">
    <property type="entry name" value="Nucleotide-bd_a/b_plait_sf"/>
</dbReference>
<dbReference type="InterPro" id="IPR035979">
    <property type="entry name" value="RBD_domain_sf"/>
</dbReference>
<dbReference type="InterPro" id="IPR000504">
    <property type="entry name" value="RRM_dom"/>
</dbReference>
<dbReference type="PANTHER" id="PTHR48026:SF13">
    <property type="entry name" value="HETEROGENEOUS NUCLEAR RIBONUCLEOPROTEINS A2_B1"/>
    <property type="match status" value="1"/>
</dbReference>
<dbReference type="PANTHER" id="PTHR48026">
    <property type="entry name" value="HOMOLOGOUS TO DROSOPHILA SQD (SQUID) PROTEIN"/>
    <property type="match status" value="1"/>
</dbReference>
<dbReference type="Pfam" id="PF11627">
    <property type="entry name" value="HnRNPA1_LC"/>
    <property type="match status" value="1"/>
</dbReference>
<dbReference type="Pfam" id="PF00076">
    <property type="entry name" value="RRM_1"/>
    <property type="match status" value="2"/>
</dbReference>
<dbReference type="SMART" id="SM00360">
    <property type="entry name" value="RRM"/>
    <property type="match status" value="2"/>
</dbReference>
<dbReference type="SUPFAM" id="SSF54928">
    <property type="entry name" value="RNA-binding domain, RBD"/>
    <property type="match status" value="2"/>
</dbReference>
<dbReference type="PROSITE" id="PS50102">
    <property type="entry name" value="RRM"/>
    <property type="match status" value="2"/>
</dbReference>
<feature type="chain" id="PRO_0000081836" description="Heterogeneous nuclear ribonucleoproteins A2/B1">
    <location>
        <begin position="1"/>
        <end position="353"/>
    </location>
</feature>
<feature type="domain" description="RRM 1" evidence="5">
    <location>
        <begin position="21"/>
        <end position="104"/>
    </location>
</feature>
<feature type="domain" description="RRM 2" evidence="5">
    <location>
        <begin position="112"/>
        <end position="191"/>
    </location>
</feature>
<feature type="region of interest" description="Disordered" evidence="22">
    <location>
        <begin position="193"/>
        <end position="353"/>
    </location>
</feature>
<feature type="region of interest" description="Nuclear targeting sequence" evidence="1">
    <location>
        <begin position="308"/>
        <end position="347"/>
    </location>
</feature>
<feature type="short sequence motif" description="Nuclear localization signal" evidence="4">
    <location>
        <begin position="9"/>
        <end position="15"/>
    </location>
</feature>
<feature type="compositionally biased region" description="Gly residues" evidence="6">
    <location>
        <begin position="202"/>
        <end position="223"/>
    </location>
</feature>
<feature type="compositionally biased region" description="Gly residues" evidence="6">
    <location>
        <begin position="320"/>
        <end position="353"/>
    </location>
</feature>
<feature type="modified residue" description="N-acetylmethionine" evidence="26 40">
    <location>
        <position position="1"/>
    </location>
</feature>
<feature type="modified residue" description="Phosphothreonine" evidence="41">
    <location>
        <position position="4"/>
    </location>
</feature>
<feature type="modified residue" description="Phosphoserine" evidence="41 43">
    <location>
        <position position="29"/>
    </location>
</feature>
<feature type="modified residue" description="Omega-N-methylarginine" evidence="3">
    <location>
        <position position="38"/>
    </location>
</feature>
<feature type="modified residue" description="Phosphoserine" evidence="37 38 43">
    <location>
        <position position="85"/>
    </location>
</feature>
<feature type="modified residue" description="N6,N6-dimethyllysine; alternate" evidence="26">
    <location>
        <position position="104"/>
    </location>
</feature>
<feature type="modified residue" description="Phosphothreonine" evidence="41">
    <location>
        <position position="140"/>
    </location>
</feature>
<feature type="modified residue" description="Phosphoserine" evidence="38">
    <location>
        <position position="149"/>
    </location>
</feature>
<feature type="modified residue" description="Phosphothreonine" evidence="41">
    <location>
        <position position="159"/>
    </location>
</feature>
<feature type="modified residue" description="N6-acetyllysine; alternate" evidence="36">
    <location>
        <position position="168"/>
    </location>
</feature>
<feature type="modified residue" description="N6-acetyllysine; alternate" evidence="36">
    <location>
        <position position="173"/>
    </location>
</feature>
<feature type="modified residue" description="Phosphothreonine" evidence="41">
    <location>
        <position position="176"/>
    </location>
</feature>
<feature type="modified residue" description="Phosphoserine" evidence="41">
    <location>
        <position position="189"/>
    </location>
</feature>
<feature type="modified residue" description="Phosphoserine" evidence="41">
    <location>
        <position position="201"/>
    </location>
</feature>
<feature type="modified residue" description="Asymmetric dimethylarginine; alternate" evidence="3">
    <location>
        <position position="203"/>
    </location>
</feature>
<feature type="modified residue" description="Dimethylated arginine; alternate" evidence="26">
    <location>
        <position position="203"/>
    </location>
</feature>
<feature type="modified residue" description="Omega-N-methylarginine; alternate" evidence="26 30 42">
    <location>
        <position position="203"/>
    </location>
</feature>
<feature type="modified residue" description="Phosphoserine" evidence="37 38 39 41 43">
    <location>
        <position position="212"/>
    </location>
</feature>
<feature type="modified residue" description="Asymmetric dimethylarginine; alternate" evidence="3">
    <location>
        <position position="213"/>
    </location>
</feature>
<feature type="modified residue" description="Dimethylated arginine; alternate" evidence="26">
    <location>
        <position position="213"/>
    </location>
</feature>
<feature type="modified residue" description="Omega-N-methylarginine; alternate" evidence="26 42">
    <location>
        <position position="213"/>
    </location>
</feature>
<feature type="modified residue" description="Phosphoserine" evidence="38 39 41 43">
    <location>
        <position position="225"/>
    </location>
</feature>
<feature type="modified residue" description="Omega-N-methylarginine" evidence="23 42">
    <location>
        <position position="228"/>
    </location>
</feature>
<feature type="modified residue" description="Phosphoserine" evidence="38 39 43">
    <location>
        <position position="231"/>
    </location>
</feature>
<feature type="modified residue" description="Phosphoserine" evidence="39">
    <location>
        <position position="236"/>
    </location>
</feature>
<feature type="modified residue" description="Omega-N-methylarginine" evidence="42">
    <location>
        <position position="238"/>
    </location>
</feature>
<feature type="modified residue" description="Phosphoserine" evidence="31 32 33 34 35 37 38 39 41">
    <location>
        <position position="259"/>
    </location>
</feature>
<feature type="modified residue" description="Asymmetric dimethylarginine; alternate" evidence="2">
    <location>
        <position position="266"/>
    </location>
</feature>
<feature type="modified residue" description="Omega-N-methylarginine; alternate" evidence="42">
    <location>
        <position position="266"/>
    </location>
</feature>
<feature type="modified residue" description="Phosphoserine" evidence="39 41">
    <location>
        <position position="324"/>
    </location>
</feature>
<feature type="modified residue" description="Omega-N-methylarginine" evidence="42">
    <location>
        <position position="325"/>
    </location>
</feature>
<feature type="modified residue" description="Phosphotyrosine" evidence="39 41">
    <location>
        <position position="331"/>
    </location>
</feature>
<feature type="modified residue" description="Phosphoserine" evidence="31 32 33 38 41 43">
    <location>
        <position position="341"/>
    </location>
</feature>
<feature type="modified residue" description="Phosphoserine" evidence="33 37 38 39 41 43">
    <location>
        <position position="344"/>
    </location>
</feature>
<feature type="modified residue" description="Phosphotyrosine" evidence="43">
    <location>
        <position position="347"/>
    </location>
</feature>
<feature type="modified residue" description="Omega-N-methylarginine" evidence="42">
    <location>
        <position position="350"/>
    </location>
</feature>
<feature type="cross-link" description="Glycyl lysine isopeptide (Lys-Gly) (interchain with G-Cter in SUMO2)" evidence="46">
    <location>
        <position position="22"/>
    </location>
</feature>
<feature type="cross-link" description="Glycyl lysine isopeptide (Lys-Gly) (interchain with G-Cter in SUMO2); alternate" evidence="46">
    <location>
        <position position="104"/>
    </location>
</feature>
<feature type="cross-link" description="Glycyl lysine isopeptide (Lys-Gly) (interchain with G-Cter in SUMO2)" evidence="46">
    <location>
        <position position="112"/>
    </location>
</feature>
<feature type="cross-link" description="Glycyl lysine isopeptide (Lys-Gly) (interchain with G-Cter in SUMO2)" evidence="44 45 46">
    <location>
        <position position="120"/>
    </location>
</feature>
<feature type="cross-link" description="Glycyl lysine isopeptide (Lys-Gly) (interchain with G-Cter in SUMO2)" evidence="46">
    <location>
        <position position="137"/>
    </location>
</feature>
<feature type="cross-link" description="Glycyl lysine isopeptide (Lys-Gly) (interchain with G-Cter in SUMO2)" evidence="46">
    <location>
        <position position="152"/>
    </location>
</feature>
<feature type="cross-link" description="Glycyl lysine isopeptide (Lys-Gly) (interchain with G-Cter in SUMO2); alternate" evidence="46">
    <location>
        <position position="168"/>
    </location>
</feature>
<feature type="cross-link" description="Glycyl lysine isopeptide (Lys-Gly) (interchain with G-Cter in SUMO2); alternate" evidence="46">
    <location>
        <position position="173"/>
    </location>
</feature>
<feature type="cross-link" description="Glycyl lysine isopeptide (Lys-Gly) (interchain with G-Cter in SUMO2)" evidence="44">
    <location>
        <position position="186"/>
    </location>
</feature>
<feature type="splice variant" id="VSP_005830" description="In isoform A2." evidence="28">
    <location>
        <begin position="3"/>
        <end position="14"/>
    </location>
</feature>
<feature type="sequence variant" id="VAR_070591" description="In IBMPFD2; dbSNP:rs397515326." evidence="16">
    <original>D</original>
    <variation>V</variation>
    <location>
        <position position="302"/>
    </location>
</feature>
<feature type="mutagenesis site" description="Does not affect hydrogel-binding." evidence="22">
    <original>F</original>
    <variation>S</variation>
    <location>
        <position position="207"/>
    </location>
</feature>
<feature type="mutagenesis site" description="Does not affect hydrogel-binding." evidence="22">
    <original>F</original>
    <variation>S</variation>
    <location>
        <position position="209"/>
    </location>
</feature>
<feature type="mutagenesis site" description="Does not affect hydrogel-binding." evidence="22">
    <original>F</original>
    <variation>S</variation>
    <location>
        <position position="219"/>
    </location>
</feature>
<feature type="mutagenesis site" description="Does not affect hydrogel-binding." evidence="22">
    <original>F</original>
    <variation>S</variation>
    <location>
        <position position="227"/>
    </location>
</feature>
<feature type="mutagenesis site" description="About 10-fold increase in interferon beta production." evidence="22">
    <original>R</original>
    <variation>A</variation>
    <location>
        <position position="228"/>
    </location>
</feature>
<feature type="mutagenesis site" description="Does not affect hydrogel-binding." evidence="22">
    <original>Y</original>
    <variation>S</variation>
    <location>
        <position position="234"/>
    </location>
</feature>
<feature type="mutagenesis site" description="Does not affect hydrogel-binding." evidence="22">
    <original>F</original>
    <variation>S</variation>
    <location>
        <position position="240"/>
    </location>
</feature>
<feature type="mutagenesis site" description="Does not affect hydrogel-binding." evidence="22">
    <original>Y</original>
    <variation>S</variation>
    <location>
        <position position="244"/>
    </location>
</feature>
<feature type="mutagenesis site" description="Slightly affects hydrogel-binding." evidence="22">
    <original>Y</original>
    <variation>S</variation>
    <location>
        <position position="247"/>
    </location>
</feature>
<feature type="mutagenesis site" description="Does not affect hydrogel-binding." evidence="22">
    <original>F</original>
    <variation>S</variation>
    <location>
        <position position="256"/>
    </location>
</feature>
<feature type="mutagenesis site" description="Slightly affects hydrogel-binding." evidence="22">
    <original>Y</original>
    <variation>S</variation>
    <location>
        <position position="262"/>
    </location>
</feature>
<feature type="mutagenesis site" description="Does not affect hydrogel-binding." evidence="22">
    <original>Y</original>
    <variation>S</variation>
    <location>
        <position position="269"/>
    </location>
</feature>
<feature type="mutagenesis site" description="Impairs hydrogel-binding." evidence="22">
    <original>Y</original>
    <variation>S</variation>
    <location>
        <position position="276"/>
    </location>
</feature>
<feature type="mutagenesis site" description="Slightly affects hydrogel-binding." evidence="22">
    <original>Y</original>
    <variation>S</variation>
    <location>
        <position position="283"/>
    </location>
</feature>
<feature type="mutagenesis site" description="Does not affect hydrogel-binding." evidence="22">
    <original>Y</original>
    <variation>S</variation>
    <location>
        <position position="287"/>
    </location>
</feature>
<feature type="mutagenesis site" description="Impairs hydrogel-binding." evidence="22">
    <original>Y</original>
    <variation>S</variation>
    <location>
        <position position="290"/>
    </location>
</feature>
<feature type="mutagenesis site" description="Impairs hydrogel-binding." evidence="22">
    <original>Y</original>
    <variation>S</variation>
    <location>
        <position position="295"/>
    </location>
</feature>
<feature type="mutagenesis site" description="Slightly affects hydrogel-binding." evidence="22">
    <original>Y</original>
    <variation>S</variation>
    <location>
        <position position="300"/>
    </location>
</feature>
<feature type="mutagenesis site" description="Impairs hydrogel-binding." evidence="22">
    <original>F</original>
    <variation>S</variation>
    <location>
        <position position="303"/>
    </location>
</feature>
<feature type="mutagenesis site" description="Slightly affects hydrogel-binding." evidence="22">
    <original>Y</original>
    <variation>S</variation>
    <location>
        <position position="306"/>
    </location>
</feature>
<feature type="mutagenesis site" description="Slightly affects hydrogel-binding." evidence="22">
    <original>Y</original>
    <variation>S</variation>
    <location>
        <position position="313"/>
    </location>
</feature>
<feature type="mutagenesis site" description="Impairs hydrogel-binding." evidence="22">
    <original>F</original>
    <variation>S</variation>
    <location>
        <position position="321"/>
    </location>
</feature>
<feature type="mutagenesis site" description="Impairs hydrogel-binding." evidence="22">
    <original>Y</original>
    <variation>S</variation>
    <location>
        <position position="331"/>
    </location>
</feature>
<feature type="mutagenesis site" description="Slightly affects hydrogel-binding." evidence="22">
    <original>Y</original>
    <variation>S</variation>
    <location>
        <position position="336"/>
    </location>
</feature>
<feature type="mutagenesis site" description="Does not affect hydrogel-binding." evidence="22">
    <original>Y</original>
    <variation>S</variation>
    <location>
        <position position="347"/>
    </location>
</feature>
<feature type="mutagenesis site" description="Does not affect hydrogel-binding." evidence="22">
    <original>Y</original>
    <variation>S</variation>
    <location>
        <position position="353"/>
    </location>
</feature>
<feature type="sequence conflict" description="In Ref. 4; BAF82118." evidence="29" ref="4">
    <original>G</original>
    <variation>S</variation>
    <location>
        <position position="205"/>
    </location>
</feature>
<feature type="helix" evidence="48">
    <location>
        <begin position="18"/>
        <end position="21"/>
    </location>
</feature>
<feature type="strand" evidence="48">
    <location>
        <begin position="22"/>
        <end position="27"/>
    </location>
</feature>
<feature type="helix" evidence="48">
    <location>
        <begin position="34"/>
        <end position="41"/>
    </location>
</feature>
<feature type="helix" evidence="48">
    <location>
        <begin position="42"/>
        <end position="44"/>
    </location>
</feature>
<feature type="strand" evidence="48">
    <location>
        <begin position="47"/>
        <end position="54"/>
    </location>
</feature>
<feature type="turn" evidence="48">
    <location>
        <begin position="56"/>
        <end position="58"/>
    </location>
</feature>
<feature type="strand" evidence="48">
    <location>
        <begin position="61"/>
        <end position="71"/>
    </location>
</feature>
<feature type="helix" evidence="48">
    <location>
        <begin position="72"/>
        <end position="80"/>
    </location>
</feature>
<feature type="strand" evidence="48">
    <location>
        <begin position="84"/>
        <end position="86"/>
    </location>
</feature>
<feature type="strand" evidence="48">
    <location>
        <begin position="89"/>
        <end position="95"/>
    </location>
</feature>
<feature type="helix" evidence="48">
    <location>
        <begin position="99"/>
        <end position="101"/>
    </location>
</feature>
<feature type="turn" evidence="48">
    <location>
        <begin position="105"/>
        <end position="108"/>
    </location>
</feature>
<feature type="strand" evidence="48">
    <location>
        <begin position="112"/>
        <end position="117"/>
    </location>
</feature>
<feature type="turn" evidence="48">
    <location>
        <begin position="120"/>
        <end position="122"/>
    </location>
</feature>
<feature type="helix" evidence="48">
    <location>
        <begin position="125"/>
        <end position="132"/>
    </location>
</feature>
<feature type="helix" evidence="48">
    <location>
        <begin position="133"/>
        <end position="135"/>
    </location>
</feature>
<feature type="strand" evidence="48">
    <location>
        <begin position="138"/>
        <end position="145"/>
    </location>
</feature>
<feature type="turn" evidence="48">
    <location>
        <begin position="147"/>
        <end position="149"/>
    </location>
</feature>
<feature type="strand" evidence="48">
    <location>
        <begin position="152"/>
        <end position="162"/>
    </location>
</feature>
<feature type="helix" evidence="48">
    <location>
        <begin position="163"/>
        <end position="169"/>
    </location>
</feature>
<feature type="strand" evidence="48">
    <location>
        <begin position="174"/>
        <end position="177"/>
    </location>
</feature>
<feature type="strand" evidence="48">
    <location>
        <begin position="180"/>
        <end position="186"/>
    </location>
</feature>
<feature type="helix" evidence="48">
    <location>
        <begin position="190"/>
        <end position="192"/>
    </location>
</feature>
<feature type="turn" evidence="47">
    <location>
        <begin position="278"/>
        <end position="281"/>
    </location>
</feature>
<feature type="strand" evidence="47">
    <location>
        <begin position="286"/>
        <end position="289"/>
    </location>
</feature>
<feature type="strand" evidence="47">
    <location>
        <begin position="291"/>
        <end position="293"/>
    </location>
</feature>
<feature type="strand" evidence="47">
    <location>
        <begin position="296"/>
        <end position="298"/>
    </location>
</feature>
<feature type="strand" evidence="47">
    <location>
        <begin position="300"/>
        <end position="302"/>
    </location>
</feature>
<feature type="strand" evidence="49">
    <location>
        <begin position="311"/>
        <end position="313"/>
    </location>
</feature>
<feature type="strand" evidence="47">
    <location>
        <begin position="316"/>
        <end position="318"/>
    </location>
</feature>
<feature type="strand" evidence="47">
    <location>
        <begin position="324"/>
        <end position="326"/>
    </location>
</feature>
<feature type="cross-link" description="Glycyl lysine isopeptide (Lys-Gly) (interchain with G-Cter in SUMO2)" evidence="46">
    <location sequence="P22626-2">
        <position position="5"/>
    </location>
</feature>
<name>ROA2_HUMAN</name>
<sequence length="353" mass="37430">MEKTLETVPLERKKREKEQFRKLFIGGLSFETTEESLRNYYEQWGKLTDCVVMRDPASKRSRGFGFVTFSSMAEVDAAMAARPHSIDGRVVEPKRAVAREESGKPGAHVTVKKLFVGGIKEDTEEHHLRDYFEEYGKIDTIEIITDRQSGKKRGFGFVTFDDHDPVDKIVLQKYHTINGHNAEVRKALSRQEMQEVQSSRSGRGGNFGFGDSRGGGGNFGPGPGSNFRGGSDGYGSGRGFGDGYNGYGGGPGGGNFGGSPGYGGGRGGYGGGGPGYGNQGGGYGGGYDNYGGGNYGSGNYNDFGNYNQQPSNYGPMKSGNFGGSRNMGGPYGGGNYGPGGSGGSGGYGGRSRY</sequence>
<keyword id="KW-0002">3D-structure</keyword>
<keyword id="KW-0007">Acetylation</keyword>
<keyword id="KW-0025">Alternative splicing</keyword>
<keyword id="KW-0963">Cytoplasm</keyword>
<keyword id="KW-0903">Direct protein sequencing</keyword>
<keyword id="KW-0225">Disease variant</keyword>
<keyword id="KW-0945">Host-virus interaction</keyword>
<keyword id="KW-1017">Isopeptide bond</keyword>
<keyword id="KW-0488">Methylation</keyword>
<keyword id="KW-0507">mRNA processing</keyword>
<keyword id="KW-0508">mRNA splicing</keyword>
<keyword id="KW-0509">mRNA transport</keyword>
<keyword id="KW-0539">Nucleus</keyword>
<keyword id="KW-0597">Phosphoprotein</keyword>
<keyword id="KW-1267">Proteomics identification</keyword>
<keyword id="KW-1185">Reference proteome</keyword>
<keyword id="KW-0677">Repeat</keyword>
<keyword id="KW-0687">Ribonucleoprotein</keyword>
<keyword id="KW-0694">RNA-binding</keyword>
<keyword id="KW-0964">Secreted</keyword>
<keyword id="KW-0747">Spliceosome</keyword>
<keyword id="KW-0813">Transport</keyword>
<keyword id="KW-0832">Ubl conjugation</keyword>